<reference key="1">
    <citation type="journal article" date="1987" name="Proc. Natl. Acad. Sci. U.S.A.">
        <title>Molecular cloning of complementary DNAs encoding the heavy chain of the human 4F2 cell-surface antigen: a type II membrane glycoprotein involved in normal and neoplastic cell growth.</title>
        <authorList>
            <person name="Quackenbush E."/>
            <person name="Clabby M."/>
            <person name="Gottesdiener K.M."/>
            <person name="Barbosa J."/>
            <person name="Jones N.H."/>
            <person name="Strominger J.L."/>
            <person name="Speck S."/>
            <person name="Leiden J.M."/>
        </authorList>
    </citation>
    <scope>NUCLEOTIDE SEQUENCE [MRNA] (ISOFORM 2)</scope>
    <scope>SUBCELLULAR LOCATION</scope>
</reference>
<reference key="2">
    <citation type="journal article" date="1987" name="Proc. Natl. Acad. Sci. U.S.A.">
        <authorList>
            <person name="Quackenbush E."/>
            <person name="Clabby M."/>
            <person name="Gottesdiener K.M."/>
            <person name="Barbosa J."/>
            <person name="Jones N.H."/>
            <person name="Strominger J.L."/>
            <person name="Speck S."/>
            <person name="Leiden J.M."/>
        </authorList>
    </citation>
    <scope>ERRATUM OF PUBMED:3476959</scope>
    <scope>SEQUENCE REVISION</scope>
</reference>
<reference key="3">
    <citation type="journal article" date="1987" name="J. Biol. Chem.">
        <title>Primary structure of the human 4F2 antigen heavy chain predicts a transmembrane protein with a cytoplasmic NH2 terminus.</title>
        <authorList>
            <person name="Teixeira S."/>
            <person name="di Grandi S."/>
            <person name="Kuehn L.C."/>
        </authorList>
    </citation>
    <scope>NUCLEOTIDE SEQUENCE [MRNA] (ISOFORM 2)</scope>
</reference>
<reference key="4">
    <citation type="journal article" date="1987" name="Proc. Natl. Acad. Sci. U.S.A.">
        <title>Cloning, sequence analysis, and expression of the large subunit of the human lymphocyte activation antigen 4F2.</title>
        <authorList>
            <person name="Lumadue J.A."/>
            <person name="Glick A.B."/>
            <person name="Ruddle F.H."/>
        </authorList>
    </citation>
    <scope>NUCLEOTIDE SEQUENCE [MRNA] (ISOFORM 2)</scope>
    <scope>SUBCELLULAR LOCATION</scope>
    <scope>TISSUE SPECIFICITY</scope>
    <scope>INDUCTION</scope>
    <source>
        <tissue>Fibroblast</tissue>
    </source>
</reference>
<reference key="5">
    <citation type="journal article" date="1988" name="Mol. Cell. Biol.">
        <title>Isolation and structural characterization of the human 4F2 heavy-chain gene, an inducible gene involved in T-lymphocyte activation.</title>
        <authorList>
            <person name="Gottesdiener K.M."/>
            <person name="Karpinski B.A."/>
            <person name="Lindsten T."/>
            <person name="Strominger J.L."/>
            <person name="Jones N.H."/>
            <person name="Thompson C.B."/>
            <person name="Leiden J.M."/>
        </authorList>
    </citation>
    <scope>NUCLEOTIDE SEQUENCE [GENOMIC DNA]</scope>
    <scope>ALTERNATIVE SPLICING (ISOFORM 2)</scope>
    <scope>TISSUE SPECIFICITY</scope>
    <scope>INDUCTION</scope>
</reference>
<reference key="6">
    <citation type="journal article" date="2001" name="Biochim. Biophys. Acta">
        <title>Human L-type amino acid transporter 1 (LAT1): characterization of function and expression in tumor cell lines.</title>
        <authorList>
            <person name="Yanagida O."/>
            <person name="Kanai Y."/>
            <person name="Chairoungdua A."/>
            <person name="Kim D.K."/>
            <person name="Segawa H."/>
            <person name="Nii T."/>
            <person name="Cha S.H."/>
            <person name="Matsuo H."/>
            <person name="Fukushima J."/>
            <person name="Fukasawa Y."/>
            <person name="Tani Y."/>
            <person name="Taketani Y."/>
            <person name="Uchino H."/>
            <person name="Kim J.Y."/>
            <person name="Inatomi J."/>
            <person name="Okayasu I."/>
            <person name="Miyamoto K."/>
            <person name="Takeda E."/>
            <person name="Goya T."/>
            <person name="Endou H."/>
        </authorList>
    </citation>
    <scope>NUCLEOTIDE SEQUENCE [MRNA] (ISOFORM 2)</scope>
    <scope>FUNCTION</scope>
    <scope>SUBUNIT</scope>
    <scope>INTERACTION WITH SLC7A5</scope>
    <scope>SUBCELLULAR LOCATION</scope>
    <scope>TISSUE SPECIFICITY</scope>
    <source>
        <tissue>Placenta</tissue>
    </source>
</reference>
<reference key="7">
    <citation type="journal article" date="2006" name="Nature">
        <title>Human chromosome 11 DNA sequence and analysis including novel gene identification.</title>
        <authorList>
            <person name="Taylor T.D."/>
            <person name="Noguchi H."/>
            <person name="Totoki Y."/>
            <person name="Toyoda A."/>
            <person name="Kuroki Y."/>
            <person name="Dewar K."/>
            <person name="Lloyd C."/>
            <person name="Itoh T."/>
            <person name="Takeda T."/>
            <person name="Kim D.-W."/>
            <person name="She X."/>
            <person name="Barlow K.F."/>
            <person name="Bloom T."/>
            <person name="Bruford E."/>
            <person name="Chang J.L."/>
            <person name="Cuomo C.A."/>
            <person name="Eichler E."/>
            <person name="FitzGerald M.G."/>
            <person name="Jaffe D.B."/>
            <person name="LaButti K."/>
            <person name="Nicol R."/>
            <person name="Park H.-S."/>
            <person name="Seaman C."/>
            <person name="Sougnez C."/>
            <person name="Yang X."/>
            <person name="Zimmer A.R."/>
            <person name="Zody M.C."/>
            <person name="Birren B.W."/>
            <person name="Nusbaum C."/>
            <person name="Fujiyama A."/>
            <person name="Hattori M."/>
            <person name="Rogers J."/>
            <person name="Lander E.S."/>
            <person name="Sakaki Y."/>
        </authorList>
    </citation>
    <scope>NUCLEOTIDE SEQUENCE [LARGE SCALE GENOMIC DNA]</scope>
    <scope>ALTERNATIVE SPLICING (ISOFORM 4)</scope>
</reference>
<reference key="8">
    <citation type="submission" date="2005-07" db="EMBL/GenBank/DDBJ databases">
        <authorList>
            <person name="Mural R.J."/>
            <person name="Istrail S."/>
            <person name="Sutton G.G."/>
            <person name="Florea L."/>
            <person name="Halpern A.L."/>
            <person name="Mobarry C.M."/>
            <person name="Lippert R."/>
            <person name="Walenz B."/>
            <person name="Shatkay H."/>
            <person name="Dew I."/>
            <person name="Miller J.R."/>
            <person name="Flanigan M.J."/>
            <person name="Edwards N.J."/>
            <person name="Bolanos R."/>
            <person name="Fasulo D."/>
            <person name="Halldorsson B.V."/>
            <person name="Hannenhalli S."/>
            <person name="Turner R."/>
            <person name="Yooseph S."/>
            <person name="Lu F."/>
            <person name="Nusskern D.R."/>
            <person name="Shue B.C."/>
            <person name="Zheng X.H."/>
            <person name="Zhong F."/>
            <person name="Delcher A.L."/>
            <person name="Huson D.H."/>
            <person name="Kravitz S.A."/>
            <person name="Mouchard L."/>
            <person name="Reinert K."/>
            <person name="Remington K.A."/>
            <person name="Clark A.G."/>
            <person name="Waterman M.S."/>
            <person name="Eichler E.E."/>
            <person name="Adams M.D."/>
            <person name="Hunkapiller M.W."/>
            <person name="Myers E.W."/>
            <person name="Venter J.C."/>
        </authorList>
    </citation>
    <scope>NUCLEOTIDE SEQUENCE [LARGE SCALE GENOMIC DNA]</scope>
</reference>
<reference key="9">
    <citation type="journal article" date="2004" name="Genome Res.">
        <title>The status, quality, and expansion of the NIH full-length cDNA project: the Mammalian Gene Collection (MGC).</title>
        <authorList>
            <consortium name="The MGC Project Team"/>
        </authorList>
    </citation>
    <scope>NUCLEOTIDE SEQUENCE [LARGE SCALE MRNA] (ISOFORMS 1 AND 3)</scope>
    <source>
        <tissue>Lung</tissue>
        <tissue>Placenta</tissue>
    </source>
</reference>
<reference key="10">
    <citation type="submission" date="2009-10" db="UniProtKB">
        <authorList>
            <person name="Bienvenut W.V."/>
            <person name="Lao L."/>
            <person name="Ryan K.L."/>
        </authorList>
    </citation>
    <scope>PROTEIN SEQUENCE OF 1-17; 146-171; 227-245; 304-313; 440-451; 511-525 AND 593-630</scope>
    <scope>ACETYLATION AT MET-1</scope>
    <scope>IDENTIFICATION BY MASS SPECTROMETRY</scope>
    <source>
        <tissue>Cervix carcinoma</tissue>
    </source>
</reference>
<reference key="11">
    <citation type="submission" date="2000-09" db="EMBL/GenBank/DDBJ databases">
        <authorList>
            <person name="Strausberg R.L."/>
        </authorList>
    </citation>
    <scope>NUCLEOTIDE SEQUENCE [LARGE SCALE MRNA] OF 83-209 (ISOFORM 4)</scope>
    <source>
        <tissue>Lung carcinoma</tissue>
    </source>
</reference>
<reference key="12">
    <citation type="submission" date="2005-03" db="UniProtKB">
        <authorList>
            <person name="Bienvenut W.V."/>
        </authorList>
    </citation>
    <scope>PROTEIN SEQUENCE OF 112-122; 148-160; 227-245; 248-255; 288-298; 304-313; 440-451; 511-524 AND 593-625</scope>
    <scope>IDENTIFICATION BY MASS SPECTROMETRY</scope>
    <source>
        <tissue>B-cell lymphoma</tissue>
    </source>
</reference>
<reference key="13">
    <citation type="journal article" date="1998" name="J. Biol. Chem.">
        <title>Identification and characterization of a membrane protein (y+L amino acid transporter-1) that associates with 4F2hc to encode the amino acid transport activity y+L. A candidate gene for lysinuric protein intolerance.</title>
        <authorList>
            <person name="Torrents D."/>
            <person name="Estevez R."/>
            <person name="Pineda M."/>
            <person name="Fernandez E."/>
            <person name="Lloberas J."/>
            <person name="Shi Y.-B."/>
            <person name="Zorzano A."/>
            <person name="Palacin M."/>
        </authorList>
    </citation>
    <scope>FUNCTION</scope>
    <scope>SUBUNIT</scope>
    <scope>SUBCELLULAR LOCATION</scope>
    <scope>INTERACTION WITH SLC7A7</scope>
    <scope>INHIBITION</scope>
    <scope>MUTAGENESIS OF CYS-210 AND CYS-431</scope>
</reference>
<reference key="14">
    <citation type="journal article" date="1998" name="Nature">
        <title>Amino-acid transport by heterodimers of 4F2hc/CD98 and members of a permease family.</title>
        <authorList>
            <person name="Mastroberardino L."/>
            <person name="Spindler B."/>
            <person name="Pfeiffer R."/>
            <person name="Skelly P.J."/>
            <person name="Loffing J."/>
            <person name="Shoemaker C.B."/>
            <person name="Verrey F."/>
        </authorList>
    </citation>
    <scope>FUNCTION</scope>
    <scope>SUBUNIT</scope>
</reference>
<reference key="15">
    <citation type="journal article" date="1999" name="EMBO J.">
        <title>Amino acid transport of y+L-type by heterodimers of 4F2hc/CD98 and members of the glycoprotein-associated amino acid transporter family.</title>
        <authorList>
            <person name="Pfeiffer R."/>
            <person name="Rossier G."/>
            <person name="Spindler B."/>
            <person name="Meier C."/>
            <person name="Kuehn L.C."/>
            <person name="Verrey F."/>
        </authorList>
    </citation>
    <scope>FUNCTION</scope>
    <scope>SUBUNIT</scope>
</reference>
<reference key="16">
    <citation type="journal article" date="1999" name="J. Biol. Chem.">
        <title>Identification of a membrane protein, LAT-2, that co-expresses with 4F2 heavy chain, an L-type amino acid transport activity with broad specificity for small and large zwitterionic amino acids.</title>
        <authorList>
            <person name="Pineda M."/>
            <person name="Fernandez E."/>
            <person name="Torrents D."/>
            <person name="Estevez R."/>
            <person name="Lopez C."/>
            <person name="Camps M."/>
            <person name="Lloberas J."/>
            <person name="Zorzano A."/>
            <person name="Palacin M."/>
        </authorList>
    </citation>
    <scope>FUNCTION</scope>
    <scope>SUBUNIT</scope>
    <scope>SUBCELLULAR LOCATION</scope>
</reference>
<reference key="17">
    <citation type="journal article" date="1999" name="J. Biol. Chem.">
        <title>LAT2, a new basolateral 4F2hc/CD98-associated amino acid transporter of kidney and intestine.</title>
        <authorList>
            <person name="Rossier G."/>
            <person name="Meier C."/>
            <person name="Bauch C."/>
            <person name="Summa V."/>
            <person name="Sordat B."/>
            <person name="Verrey F."/>
            <person name="Kuehn L.C."/>
        </authorList>
    </citation>
    <scope>FUNCTION</scope>
    <scope>SUBUNIT</scope>
    <scope>INTERACTION WITH SLC7A8</scope>
</reference>
<reference key="18">
    <citation type="journal article" date="2000" name="Biochem. J.">
        <title>The heterodimeric amino acid transporter 4F2hc/y+LAT2 mediates arginine efflux in exchange with glutamine.</title>
        <authorList>
            <person name="Broeer A."/>
            <person name="Wagner C.A."/>
            <person name="Lang F."/>
            <person name="Broeer S."/>
        </authorList>
    </citation>
    <scope>FUNCTION</scope>
    <scope>SUBUNIT</scope>
    <scope>INTERACTION WITH SLC7A6</scope>
</reference>
<reference key="19">
    <citation type="journal article" date="2001" name="Biochem. J.">
        <title>Association of 4F2hc with light chains LAT1, LAT2 or y+LAT2 requires different domains.</title>
        <authorList>
            <person name="Broeer A."/>
            <person name="Friedrich B."/>
            <person name="Wagner C.A."/>
            <person name="Fillon S."/>
            <person name="Ganapathy V."/>
            <person name="Lang F."/>
            <person name="Broeer S."/>
        </authorList>
    </citation>
    <scope>FUNCTION</scope>
    <scope>SUBUNIT</scope>
    <scope>SUBCELLULAR LOCATION</scope>
</reference>
<reference key="20">
    <citation type="journal article" date="2001" name="Biochem. J.">
        <title>Role of the System L permease LAT1 in amino acid and iodothyronine transport in placenta.</title>
        <authorList>
            <person name="Ritchie J.W.A."/>
            <person name="Taylor P.M."/>
        </authorList>
    </citation>
    <scope>FUNCTION</scope>
    <scope>SUBUNIT</scope>
    <scope>SUBCELLULAR LOCATION</scope>
    <scope>TISSUE SPECIFICITY</scope>
</reference>
<reference key="21">
    <citation type="journal article" date="2001" name="BMC Biochem.">
        <title>Beta1 integrins show specific association with CD98 protein in low density membranes.</title>
        <authorList>
            <person name="Kolesnikova T.V."/>
            <person name="Mannion B.A."/>
            <person name="Berditchevski F."/>
            <person name="Hemler M.E."/>
        </authorList>
    </citation>
    <scope>SUBUNIT</scope>
    <scope>INTERACTION WITH BETA-1 INTEGRINS</scope>
    <scope>MUTAGENESIS OF CYS-210 AND CYS-431</scope>
</reference>
<reference key="22">
    <citation type="journal article" date="2001" name="Endocrinology">
        <title>Thyroid hormone transport by the heterodimeric human system L amino acid transporter.</title>
        <authorList>
            <person name="Friesema E.C.H."/>
            <person name="Docter R."/>
            <person name="Moerings E.P.C.M."/>
            <person name="Verrey F."/>
            <person name="Krenning E.P."/>
            <person name="Hennemann G."/>
            <person name="Visser T.J."/>
        </authorList>
    </citation>
    <scope>FUNCTION</scope>
    <scope>SUBUNIT</scope>
</reference>
<reference key="23">
    <citation type="journal article" date="2001" name="J. Biol. Chem.">
        <title>Distinct domains of CD98hc regulate integrins and amino acid transport.</title>
        <authorList>
            <person name="Fenczik C.A."/>
            <person name="Zent R."/>
            <person name="Dellos M."/>
            <person name="Calderwood D.A."/>
            <person name="Satriano J."/>
            <person name="Kelly C."/>
            <person name="Ginsberg M.H."/>
        </authorList>
    </citation>
    <scope>FUNCTION</scope>
    <scope>TOPOLOGY</scope>
</reference>
<reference key="24">
    <citation type="journal article" date="2002" name="Am. J. Physiol.">
        <title>Expression and regulation of 4F2hc and hLAT1 in human trophoblasts.</title>
        <authorList>
            <person name="Okamoto Y."/>
            <person name="Sakata M."/>
            <person name="Ogura K."/>
            <person name="Yamamoto T."/>
            <person name="Yamaguchi M."/>
            <person name="Tasaka K."/>
            <person name="Kurachi H."/>
            <person name="Tsurudome M."/>
            <person name="Murata Y."/>
        </authorList>
    </citation>
    <scope>FUNCTION</scope>
    <scope>SUBCELLULAR LOCATION</scope>
    <scope>TISSUE SPECIFICITY</scope>
    <scope>INDUCTION</scope>
</reference>
<reference key="25">
    <citation type="journal article" date="2002" name="Biochem. Biophys. Res. Commun.">
        <title>Molecular cloning and characterization of CT120, a novel membrane-associated gene involved in amino acid transport and glutathione metabolism.</title>
        <authorList>
            <person name="He X.H."/>
            <person name="Di Y."/>
            <person name="Li J."/>
            <person name="Xie Y."/>
            <person name="Tang Y."/>
            <person name="Zhang F."/>
            <person name="Wei L."/>
            <person name="Zhang Y."/>
            <person name="Qin W.X."/>
            <person name="Huo K."/>
            <person name="Li Y."/>
            <person name="Wan D.F."/>
            <person name="Gu J.R."/>
        </authorList>
    </citation>
    <scope>INTERACTION WITH TLCD3A/CT120</scope>
</reference>
<reference key="26">
    <citation type="journal article" date="2002" name="Biochem. J.">
        <title>Transport of a neurotoxicant by molecular mimicry: the methylmercury-L-cysteine complex is a substrate for human L-type large neutral amino acid transporter (LAT) 1 and LAT2.</title>
        <authorList>
            <person name="Simmons-Willis T.A."/>
            <person name="Koh A.S."/>
            <person name="Clarkson T.W."/>
            <person name="Ballatori N."/>
        </authorList>
    </citation>
    <scope>FUNCTION</scope>
    <scope>SUBUNIT</scope>
</reference>
<reference key="27">
    <citation type="journal article" date="2002" name="Biochim. Biophys. Acta">
        <title>Characterization of the system L amino acid transporter in T24 human bladder carcinoma cells.</title>
        <authorList>
            <person name="Kim D.K."/>
            <person name="Kanai Y."/>
            <person name="Choi H.W."/>
            <person name="Tangtrongsup S."/>
            <person name="Chairoungdua A."/>
            <person name="Babu E."/>
            <person name="Tachampa K."/>
            <person name="Anzai N."/>
            <person name="Iribe Y."/>
            <person name="Endou H."/>
        </authorList>
    </citation>
    <scope>FUNCTION</scope>
    <scope>SUBUNIT</scope>
    <scope>SUBCELLULAR LOCATION</scope>
</reference>
<reference key="28">
    <citation type="journal article" date="2002" name="Proteomics">
        <title>Cluster analysis of an extensive human breast cancer cell line protein expression map database.</title>
        <authorList>
            <person name="Harris R.A."/>
            <person name="Yang A."/>
            <person name="Stein R.C."/>
            <person name="Lucy K."/>
            <person name="Brusten L."/>
            <person name="Herath A."/>
            <person name="Parekh R."/>
            <person name="Waterfield M.D."/>
            <person name="O'Hare M.J."/>
            <person name="Neville M.A."/>
            <person name="Page M.J."/>
            <person name="Zvelebil M.J."/>
        </authorList>
    </citation>
    <scope>MASS SPECTROMETRY</scope>
    <source>
        <tissue>Mammary cancer</tissue>
    </source>
</reference>
<reference key="29">
    <citation type="journal article" date="2003" name="Exp. Physiol.">
        <title>Nitric oxide synthesis requires activity of the cationic and neutral amino acid transport system y+L in human umbilical vein endothelium.</title>
        <authorList>
            <person name="Arancibia-Garavilla Y."/>
            <person name="Toledo F."/>
            <person name="Casanello P."/>
            <person name="Sobrevia L."/>
        </authorList>
    </citation>
    <scope>SUBUNIT</scope>
    <scope>TISSUE SPECIFICITY</scope>
</reference>
<reference key="30">
    <citation type="journal article" date="2003" name="J. Biol. Chem.">
        <title>CD98 and intracellular adhesion molecule I regulate the activity of amino acid transporter LAT-2 in polarized intestinal epithelia.</title>
        <authorList>
            <person name="Liu X."/>
            <person name="Charrier L."/>
            <person name="Gewirtz A."/>
            <person name="Sitaraman S."/>
            <person name="Merlin D."/>
        </authorList>
    </citation>
    <scope>FUNCTION</scope>
    <scope>SUBUNIT</scope>
    <scope>INTERACTION WITH ICAM1</scope>
    <scope>SUBCELLULAR LOCATION</scope>
    <scope>TISSUE SPECIFICITY</scope>
</reference>
<reference key="31">
    <citation type="journal article" date="2003" name="Nat. Biotechnol.">
        <title>Identification and quantification of N-linked glycoproteins using hydrazide chemistry, stable isotope labeling and mass spectrometry.</title>
        <authorList>
            <person name="Zhang H."/>
            <person name="Li X.-J."/>
            <person name="Martin D.B."/>
            <person name="Aebersold R."/>
        </authorList>
    </citation>
    <scope>GLYCOSYLATION AT ASN-365; ASN-381 AND ASN-424</scope>
</reference>
<reference key="32">
    <citation type="journal article" date="2005" name="Invest. Ophthalmol. Vis. Sci.">
        <title>L-type amino acid transporter 1-mediated L-leucine transport at the inner blood-retinal barrier.</title>
        <authorList>
            <person name="Tomi M."/>
            <person name="Mori M."/>
            <person name="Tachikawa M."/>
            <person name="Katayama K."/>
            <person name="Terasaki T."/>
            <person name="Hosoya K."/>
        </authorList>
    </citation>
    <scope>FUNCTION</scope>
    <scope>TISSUE SPECIFICITY</scope>
</reference>
<reference key="33">
    <citation type="journal article" date="2005" name="J. Biol. Chem.">
        <title>Identification of stereoselective transporters for S-nitroso-L-cysteine: role of LAT1 and LAT2 in biological activity of S-nitrosothiols.</title>
        <authorList>
            <person name="Li S."/>
            <person name="Whorton A.R."/>
        </authorList>
    </citation>
    <scope>FUNCTION</scope>
    <scope>SUBUNIT</scope>
</reference>
<reference key="34">
    <citation type="journal article" date="2005" name="J. Proteome Res.">
        <title>Human plasma N-glycoproteome analysis by immunoaffinity subtraction, hydrazide chemistry, and mass spectrometry.</title>
        <authorList>
            <person name="Liu T."/>
            <person name="Qian W.-J."/>
            <person name="Gritsenko M.A."/>
            <person name="Camp D.G. II"/>
            <person name="Monroe M.E."/>
            <person name="Moore R.J."/>
            <person name="Smith R.D."/>
        </authorList>
    </citation>
    <scope>GLYCOSYLATION [LARGE SCALE ANALYSIS] AT ASN-381 AND ASN-424</scope>
    <source>
        <tissue>Plasma</tissue>
    </source>
</reference>
<reference key="35">
    <citation type="journal article" date="2005" name="Proc. Natl. Acad. Sci. U.S.A.">
        <title>CD98hc (SLC3A2) mediates integrin signaling.</title>
        <authorList>
            <person name="Feral C.C."/>
            <person name="Nishiya N."/>
            <person name="Fenczik C.A."/>
            <person name="Stuhlmann H."/>
            <person name="Slepak M."/>
            <person name="Ginsberg M.H."/>
        </authorList>
    </citation>
    <scope>FUNCTION</scope>
</reference>
<reference key="36">
    <citation type="journal article" date="2006" name="Cell">
        <title>Global, in vivo, and site-specific phosphorylation dynamics in signaling networks.</title>
        <authorList>
            <person name="Olsen J.V."/>
            <person name="Blagoev B."/>
            <person name="Gnad F."/>
            <person name="Macek B."/>
            <person name="Kumar C."/>
            <person name="Mortensen P."/>
            <person name="Mann M."/>
        </authorList>
    </citation>
    <scope>IDENTIFICATION BY MASS SPECTROMETRY [LARGE SCALE ANALYSIS]</scope>
    <source>
        <tissue>Cervix carcinoma</tissue>
    </source>
</reference>
<reference key="37">
    <citation type="journal article" date="2006" name="Int. J. Cancer">
        <title>L-type amino acid transporter 1 as a potential molecular target in human astrocytic tumors.</title>
        <authorList>
            <person name="Nawashiro H."/>
            <person name="Otani N."/>
            <person name="Shinomiya N."/>
            <person name="Fukui S."/>
            <person name="Ooigawa H."/>
            <person name="Shima K."/>
            <person name="Matsuo H."/>
            <person name="Kanai Y."/>
            <person name="Endou H."/>
        </authorList>
    </citation>
    <scope>SUBCELLULAR LOCATION</scope>
    <scope>TISSUE SPECIFICITY</scope>
</reference>
<reference key="38">
    <citation type="journal article" date="2006" name="J. Proteome Res.">
        <title>Proteomic and bioinformatic characterization of the biogenesis and function of melanosomes.</title>
        <authorList>
            <person name="Chi A."/>
            <person name="Valencia J.C."/>
            <person name="Hu Z.-Z."/>
            <person name="Watabe H."/>
            <person name="Yamaguchi H."/>
            <person name="Mangini N.J."/>
            <person name="Huang H."/>
            <person name="Canfield V.A."/>
            <person name="Cheng K.C."/>
            <person name="Yang F."/>
            <person name="Abe R."/>
            <person name="Yamagishi S."/>
            <person name="Shabanowitz J."/>
            <person name="Hearing V.J."/>
            <person name="Wu C."/>
            <person name="Appella E."/>
            <person name="Hunt D.F."/>
        </authorList>
    </citation>
    <scope>SUBCELLULAR LOCATION [LARGE SCALE ANALYSIS]</scope>
    <source>
        <tissue>Melanoma</tissue>
    </source>
</reference>
<reference key="39">
    <citation type="journal article" date="2008" name="PLoS ONE">
        <title>Ecto-phosphorylation of CD98 regulates cell-cell interactions.</title>
        <authorList>
            <person name="Nguyen H.T.T."/>
            <person name="Dalmasso G."/>
            <person name="Yan Y."/>
            <person name="Obertone T.S."/>
            <person name="Sitaraman S.V."/>
            <person name="Merlin D."/>
        </authorList>
    </citation>
    <scope>PHOSPHORYLATION AT SER-406; SER-408; SER-410; SER-527 AND SER-531</scope>
</reference>
<reference key="40">
    <citation type="journal article" date="2009" name="Anal. Chem.">
        <title>Lys-N and trypsin cover complementary parts of the phosphoproteome in a refined SCX-based approach.</title>
        <authorList>
            <person name="Gauci S."/>
            <person name="Helbig A.O."/>
            <person name="Slijper M."/>
            <person name="Krijgsveld J."/>
            <person name="Heck A.J."/>
            <person name="Mohammed S."/>
        </authorList>
    </citation>
    <scope>ACETYLATION [LARGE SCALE ANALYSIS] AT SER-2 (ISOFORM 2)</scope>
    <scope>CLEAVAGE OF INITIATOR METHIONINE [LARGE SCALE ANALYSIS] (ISOFORM 2)</scope>
    <scope>IDENTIFICATION BY MASS SPECTROMETRY [LARGE SCALE ANALYSIS]</scope>
</reference>
<reference key="41">
    <citation type="journal article" date="2009" name="Eur. J. Clin. Invest.">
        <title>CD98hc (SLC3A2), a novel marker in renal cell cancer.</title>
        <authorList>
            <person name="Prager G.W."/>
            <person name="Poettler M."/>
            <person name="Schmidinger M."/>
            <person name="Mazal P.R."/>
            <person name="Susani M."/>
            <person name="Zielinski C.C."/>
            <person name="Haitel A."/>
        </authorList>
    </citation>
    <scope>INDUCTION</scope>
</reference>
<reference key="42">
    <citation type="journal article" date="2009" name="J. Proteome Res.">
        <title>Glycoproteomics analysis of human liver tissue by combination of multiple enzyme digestion and hydrazide chemistry.</title>
        <authorList>
            <person name="Chen R."/>
            <person name="Jiang X."/>
            <person name="Sun D."/>
            <person name="Han G."/>
            <person name="Wang F."/>
            <person name="Ye M."/>
            <person name="Wang L."/>
            <person name="Zou H."/>
        </authorList>
    </citation>
    <scope>GLYCOSYLATION [LARGE SCALE ANALYSIS] AT ASN-365; ASN-381 AND ASN-506</scope>
    <source>
        <tissue>Liver</tissue>
    </source>
</reference>
<reference key="43">
    <citation type="journal article" date="2009" name="Mol. Cell. Proteomics">
        <title>A strategy for precise and large scale identification of core fucosylated glycoproteins.</title>
        <authorList>
            <person name="Jia W."/>
            <person name="Lu Z."/>
            <person name="Fu Y."/>
            <person name="Wang H.P."/>
            <person name="Wang L.H."/>
            <person name="Chi H."/>
            <person name="Yuan Z.F."/>
            <person name="Zheng Z.B."/>
            <person name="Song L.N."/>
            <person name="Han H.H."/>
            <person name="Liang Y.M."/>
            <person name="Wang J.L."/>
            <person name="Cai Y."/>
            <person name="Zhang Y.K."/>
            <person name="Deng Y.L."/>
            <person name="Ying W.T."/>
            <person name="He S.M."/>
            <person name="Qian X.H."/>
        </authorList>
    </citation>
    <scope>GLYCOSYLATION AT ASN-424</scope>
</reference>
<reference key="44">
    <citation type="journal article" date="2009" name="Nat. Biotechnol.">
        <title>Mass-spectrometric identification and relative quantification of N-linked cell surface glycoproteins.</title>
        <authorList>
            <person name="Wollscheid B."/>
            <person name="Bausch-Fluck D."/>
            <person name="Henderson C."/>
            <person name="O'Brien R."/>
            <person name="Bibel M."/>
            <person name="Schiess R."/>
            <person name="Aebersold R."/>
            <person name="Watts J.D."/>
        </authorList>
    </citation>
    <scope>GLYCOSYLATION [LARGE SCALE ANALYSIS] AT ASN-365; ASN-381; ASN-424 AND ASN-506</scope>
    <source>
        <tissue>Leukemic T-cell</tissue>
    </source>
</reference>
<reference key="45">
    <citation type="journal article" date="2009" name="Sci. Signal.">
        <title>Quantitative phosphoproteomic analysis of T cell receptor signaling reveals system-wide modulation of protein-protein interactions.</title>
        <authorList>
            <person name="Mayya V."/>
            <person name="Lundgren D.H."/>
            <person name="Hwang S.-I."/>
            <person name="Rezaul K."/>
            <person name="Wu L."/>
            <person name="Eng J.K."/>
            <person name="Rodionov V."/>
            <person name="Han D.K."/>
        </authorList>
    </citation>
    <scope>PHOSPHORYLATION [LARGE SCALE ANALYSIS] AT SER-165</scope>
    <scope>IDENTIFICATION BY MASS SPECTROMETRY [LARGE SCALE ANALYSIS]</scope>
    <source>
        <tissue>Leukemic T-cell</tissue>
    </source>
</reference>
<reference key="46">
    <citation type="journal article" date="2011" name="BMC Syst. Biol.">
        <title>Initial characterization of the human central proteome.</title>
        <authorList>
            <person name="Burkard T.R."/>
            <person name="Planyavsky M."/>
            <person name="Kaupe I."/>
            <person name="Breitwieser F.P."/>
            <person name="Buerckstuemmer T."/>
            <person name="Bennett K.L."/>
            <person name="Superti-Furga G."/>
            <person name="Colinge J."/>
        </authorList>
    </citation>
    <scope>IDENTIFICATION BY MASS SPECTROMETRY [LARGE SCALE ANALYSIS]</scope>
</reference>
<reference key="47">
    <citation type="journal article" date="2011" name="Sci. Signal.">
        <title>System-wide temporal characterization of the proteome and phosphoproteome of human embryonic stem cell differentiation.</title>
        <authorList>
            <person name="Rigbolt K.T."/>
            <person name="Prokhorova T.A."/>
            <person name="Akimov V."/>
            <person name="Henningsen J."/>
            <person name="Johansen P.T."/>
            <person name="Kratchmarova I."/>
            <person name="Kassem M."/>
            <person name="Mann M."/>
            <person name="Olsen J.V."/>
            <person name="Blagoev B."/>
        </authorList>
    </citation>
    <scope>ACETYLATION [LARGE SCALE ANALYSIS] AT SER-2 (ISOFORM 2)</scope>
    <scope>PHOSPHORYLATION [LARGE SCALE ANALYSIS] AT SER-2 (ISOFORM 2)</scope>
    <scope>CLEAVAGE OF INITIATOR METHIONINE [LARGE SCALE ANALYSIS] (ISOFORM 2)</scope>
    <scope>IDENTIFICATION BY MASS SPECTROMETRY [LARGE SCALE ANALYSIS]</scope>
</reference>
<reference key="48">
    <citation type="journal article" date="2012" name="J. Proteome Res.">
        <title>Discovery of SLC3A2 cell membrane protein as a potential gastric cancer biomarker: implications in molecular imaging.</title>
        <authorList>
            <person name="Yang Y."/>
            <person name="Toy W."/>
            <person name="Choong L.Y."/>
            <person name="Hou P."/>
            <person name="Ashktorab H."/>
            <person name="Smoot D.T."/>
            <person name="Yeoh K.G."/>
            <person name="Lim Y.P."/>
        </authorList>
    </citation>
    <scope>INDUCTION</scope>
</reference>
<reference key="49">
    <citation type="journal article" date="2012" name="Mol. Cell. Proteomics">
        <title>Comparative large-scale characterisation of plant vs. mammal proteins reveals similar and idiosyncratic N-alpha acetylation features.</title>
        <authorList>
            <person name="Bienvenut W.V."/>
            <person name="Sumpton D."/>
            <person name="Martinez A."/>
            <person name="Lilla S."/>
            <person name="Espagne C."/>
            <person name="Meinnel T."/>
            <person name="Giglione C."/>
        </authorList>
    </citation>
    <scope>ACETYLATION [LARGE SCALE ANALYSIS] AT SER-2 (ISOFORM 2)</scope>
    <scope>CLEAVAGE OF INITIATOR METHIONINE [LARGE SCALE ANALYSIS] (ISOFORM 2)</scope>
    <scope>IDENTIFICATION BY MASS SPECTROMETRY [LARGE SCALE ANALYSIS]</scope>
</reference>
<reference key="50">
    <citation type="journal article" date="2012" name="Proc. Natl. Acad. Sci. U.S.A.">
        <title>N-terminal acetylome analyses and functional insights of the N-terminal acetyltransferase NatB.</title>
        <authorList>
            <person name="Van Damme P."/>
            <person name="Lasa M."/>
            <person name="Polevoda B."/>
            <person name="Gazquez C."/>
            <person name="Elosegui-Artola A."/>
            <person name="Kim D.S."/>
            <person name="De Juan-Pardo E."/>
            <person name="Demeyer K."/>
            <person name="Hole K."/>
            <person name="Larrea E."/>
            <person name="Timmerman E."/>
            <person name="Prieto J."/>
            <person name="Arnesen T."/>
            <person name="Sherman F."/>
            <person name="Gevaert K."/>
            <person name="Aldabe R."/>
        </authorList>
    </citation>
    <scope>ACETYLATION [LARGE SCALE ANALYSIS] AT MET-1</scope>
    <scope>IDENTIFICATION BY MASS SPECTROMETRY [LARGE SCALE ANALYSIS]</scope>
</reference>
<reference key="51">
    <citation type="journal article" date="2013" name="J. Proteome Res.">
        <title>Toward a comprehensive characterization of a human cancer cell phosphoproteome.</title>
        <authorList>
            <person name="Zhou H."/>
            <person name="Di Palma S."/>
            <person name="Preisinger C."/>
            <person name="Peng M."/>
            <person name="Polat A.N."/>
            <person name="Heck A.J."/>
            <person name="Mohammed S."/>
        </authorList>
    </citation>
    <scope>PHOSPHORYLATION [LARGE SCALE ANALYSIS] AT SER-103; SER-134 AND SER-165</scope>
    <scope>IDENTIFICATION BY MASS SPECTROMETRY [LARGE SCALE ANALYSIS]</scope>
    <source>
        <tissue>Cervix carcinoma</tissue>
        <tissue>Erythroleukemia</tissue>
    </source>
</reference>
<reference key="52">
    <citation type="journal article" date="2014" name="J. Proteomics">
        <title>An enzyme assisted RP-RPLC approach for in-depth analysis of human liver phosphoproteome.</title>
        <authorList>
            <person name="Bian Y."/>
            <person name="Song C."/>
            <person name="Cheng K."/>
            <person name="Dong M."/>
            <person name="Wang F."/>
            <person name="Huang J."/>
            <person name="Sun D."/>
            <person name="Wang L."/>
            <person name="Ye M."/>
            <person name="Zou H."/>
        </authorList>
    </citation>
    <scope>IDENTIFICATION BY MASS SPECTROMETRY [LARGE SCALE ANALYSIS]</scope>
    <source>
        <tissue>Liver</tissue>
    </source>
</reference>
<reference key="53">
    <citation type="journal article" date="2014" name="Proc. Natl. Acad. Sci. U.S.A.">
        <title>Mapping of SUMO sites and analysis of SUMOylation changes induced by external stimuli.</title>
        <authorList>
            <person name="Impens F."/>
            <person name="Radoshevich L."/>
            <person name="Cossart P."/>
            <person name="Ribet D."/>
        </authorList>
    </citation>
    <scope>SUMOYLATION [LARGE SCALE ANALYSIS] AT LYS-166</scope>
    <scope>IDENTIFICATION BY MASS SPECTROMETRY [LARGE SCALE ANALYSIS]</scope>
</reference>
<reference key="54">
    <citation type="journal article" date="2015" name="Nat. Commun.">
        <title>LAPTM4b recruits the LAT1-4F2hc Leu transporter to lysosomes and promotes mTORC1 activation.</title>
        <authorList>
            <person name="Milkereit R."/>
            <person name="Persaud A."/>
            <person name="Vanoaica L."/>
            <person name="Guetg A."/>
            <person name="Verrey F."/>
            <person name="Rotin D."/>
        </authorList>
    </citation>
    <scope>INTERACTION WITH LAPTM4B</scope>
    <scope>FUNCTION</scope>
    <scope>SUBCELLULAR LOCATION</scope>
    <scope>SUBUNIT</scope>
</reference>
<reference key="55">
    <citation type="journal article" date="2015" name="Proteomics">
        <title>N-terminome analysis of the human mitochondrial proteome.</title>
        <authorList>
            <person name="Vaca Jacome A.S."/>
            <person name="Rabilloud T."/>
            <person name="Schaeffer-Reiss C."/>
            <person name="Rompais M."/>
            <person name="Ayoub D."/>
            <person name="Lane L."/>
            <person name="Bairoch A."/>
            <person name="Van Dorsselaer A."/>
            <person name="Carapito C."/>
        </authorList>
    </citation>
    <scope>IDENTIFICATION BY MASS SPECTROMETRY [LARGE SCALE ANALYSIS]</scope>
</reference>
<reference key="56">
    <citation type="journal article" date="2017" name="Oncol. Rep.">
        <title>SLC3A2 is upregulated in human osteosarcoma and promotes tumor growth through the PI3K/Akt signaling pathway.</title>
        <authorList>
            <person name="Zhu B."/>
            <person name="Cheng D."/>
            <person name="Hou L."/>
            <person name="Zhou S."/>
            <person name="Ying T."/>
            <person name="Yang Q."/>
        </authorList>
    </citation>
    <scope>INDUCTION</scope>
</reference>
<reference key="57">
    <citation type="journal article" date="2018" name="Sci. Rep.">
        <title>Hepatitis C Virus Modulates Solute carrier family 3 member 2 for Viral Propagation.</title>
        <authorList>
            <person name="Nguyen N.N.T."/>
            <person name="Lim Y.S."/>
            <person name="Nguyen L.P."/>
            <person name="Tran S.C."/>
            <person name="Luong T.T.D."/>
            <person name="Nguyen T.T.T."/>
            <person name="Pham H.T."/>
            <person name="Mai H.N."/>
            <person name="Choi J.W."/>
            <person name="Han S.S."/>
            <person name="Hwang S.B."/>
        </authorList>
    </citation>
    <scope>FUNCTION</scope>
    <scope>FUNCTION (MICROBIAL INFECTION)</scope>
    <scope>INDUCTION BY HCV (MICROBIAL INFECTION)</scope>
    <scope>INDUCTION BY HYDROGEN PEROXIDE</scope>
    <scope>INTERACTION WITH HEPATITIS VIRUS C/HCV PROTEIN E2 (MICROBIAL INFECTION)</scope>
</reference>
<reference key="58">
    <citation type="journal article" date="2020" name="Int. J. Mol. Sci.">
        <title>The Heavy Chain 4F2hc Modulates the Substrate Affinity and Specificity of the Light Chains LAT1 and LAT2.</title>
        <authorList>
            <person name="Kantipudi S."/>
            <person name="Jeckelmann J.M."/>
            <person name="Ucurum Z."/>
            <person name="Bosshart P.D."/>
            <person name="Fotiadis D."/>
        </authorList>
    </citation>
    <scope>FUNCTION</scope>
</reference>
<reference key="59">
    <citation type="journal article" date="2021" name="Nat. Microbiol.">
        <title>Plasmodium vivax binds host CD98hc (SLC3A2) to enter immature red blood cells.</title>
        <authorList>
            <person name="Malleret B."/>
            <person name="El Sahili A."/>
            <person name="Tay M.Z."/>
            <person name="Carissimo G."/>
            <person name="Ong A.S.M."/>
            <person name="Novera W."/>
            <person name="Lin J."/>
            <person name="Suwanarusk R."/>
            <person name="Kosaisavee V."/>
            <person name="Chu T.T.T."/>
            <person name="Sinha A."/>
            <person name="Howland S.W."/>
            <person name="Fan Y."/>
            <person name="Gruszczyk J."/>
            <person name="Tham W.H."/>
            <person name="Colin Y."/>
            <person name="Maurer-Stroh S."/>
            <person name="Snounou G."/>
            <person name="Ng L.F.P."/>
            <person name="Chan J.K.Y."/>
            <person name="Chacko A.M."/>
            <person name="Lescar J."/>
            <person name="Chandramohanadas R."/>
            <person name="Nosten F."/>
            <person name="Russell B."/>
            <person name="Renia L."/>
        </authorList>
    </citation>
    <scope>FUNCTION (MICROBIAL INFECTION)</scope>
    <scope>TISSUE SPECIFICITY</scope>
</reference>
<reference key="60">
    <citation type="journal article" date="2022" name="Sci. Rep.">
        <title>N-glycosylation is crucial for trafficking and stability of SLC3A2 (CD98).</title>
        <authorList>
            <person name="Console L."/>
            <person name="Scalise M."/>
            <person name="Salerno S."/>
            <person name="Scanga R."/>
            <person name="Giudice D."/>
            <person name="De Bartolo L."/>
            <person name="Tonazzi A."/>
            <person name="Indiveri C."/>
        </authorList>
    </citation>
    <scope>SUBCELLULAR LOCATION</scope>
    <scope>GLYCOSYLATION</scope>
    <scope>MUTAGENESIS OF ASN-365; ASN-381; ASN-424 AND ASN-506</scope>
</reference>
<reference key="61">
    <citation type="journal article" date="2007" name="J. Biol. Chem.">
        <title>The structure of human 4F2hc ectodomain provides a model for homodimerization and electrostatic interaction with plasma membrane.</title>
        <authorList>
            <person name="Fort J."/>
            <person name="de la Ballina L.R."/>
            <person name="Burghardt H.E."/>
            <person name="Ferrer-Costa C."/>
            <person name="Turnay J."/>
            <person name="Ferrer-Orta C."/>
            <person name="Uson I."/>
            <person name="Zorzano A."/>
            <person name="Fernandez-Recio J."/>
            <person name="Orozco M."/>
            <person name="Lizarbe M.A."/>
            <person name="Fita I."/>
            <person name="Palacin M."/>
        </authorList>
    </citation>
    <scope>X-RAY CRYSTALLOGRAPHY (2.1 ANGSTROMS) OF 212-630</scope>
    <scope>SUBUNIT</scope>
    <scope>MUTAGENESIS OF CYS-210</scope>
    <scope>SUBCELLULAR LOCATION</scope>
    <scope>DISULFIDE BOND</scope>
</reference>
<reference evidence="64 65" key="62">
    <citation type="journal article" date="2019" name="Nature">
        <title>Structure of the human LAT1-4F2hc heteromeric amino acid transporter complex.</title>
        <authorList>
            <person name="Yan R."/>
            <person name="Zhao X."/>
            <person name="Lei J."/>
            <person name="Zhou Q."/>
        </authorList>
    </citation>
    <scope>STRUCTURE BY ELECTRON MICROSCOPY (3.30 ANGSTROMS) IN COMPLEX WITH SLC7A5</scope>
    <scope>FUNCTION</scope>
    <scope>SUBUNIT</scope>
    <scope>TOPOLOGY</scope>
    <scope>GLYCOSYLATION AT ASN-365; ASN-381; ASN-424 AND ASN-506</scope>
    <scope>DISULFIDE BOND</scope>
    <scope>MUTAGENESIS OF ARG-182; 234-GLN--ALA-630 AND LYS-532</scope>
</reference>
<reference evidence="66 67" key="63">
    <citation type="journal article" date="2020" name="Cell Discov.">
        <title>Structural insight into the substrate recognition and transport mechanism of the human LAT2-4F2hc complex.</title>
        <authorList>
            <person name="Yan R."/>
            <person name="Zhou J."/>
            <person name="Li Y."/>
            <person name="Lei J."/>
            <person name="Zhou Q."/>
        </authorList>
    </citation>
    <scope>STRUCTURE BY ELECTRON MICROSCOPY (2.90 ANGSTROMS) OF IN COMPLEX WITH SLC7A8; TRYPTOPHAN AND LEUCINE</scope>
    <scope>GLYCOSYLATION AT ASN-365; ASN-381; ASN-424 AND ASN-506</scope>
    <scope>FUNCTION</scope>
    <scope>DISULFIDE BOND</scope>
</reference>
<reference evidence="68 69 70 71" key="64">
    <citation type="journal article" date="2021" name="Cell Discov.">
        <title>Mechanism of substrate transport and inhibition of the human LAT1-4F2hc amino acid transporter.</title>
        <authorList>
            <person name="Yan R."/>
            <person name="Li Y."/>
            <person name="Muller J."/>
            <person name="Zhang Y."/>
            <person name="Singer S."/>
            <person name="Xia L."/>
            <person name="Zhong X."/>
            <person name="Gertsch J."/>
            <person name="Altmann K.H."/>
            <person name="Zhou Q."/>
        </authorList>
    </citation>
    <scope>STRUCTURE BY ELECTRON MICROSCOPY (2.90 ANGSTROMS) OF 2-507 IN COMPLEX WITH SLC7A8</scope>
    <scope>GLYCOSYLATION AT ASN-365; ASN-381; ASN-424 AND ASN-506</scope>
    <scope>DISULFIDE BOND</scope>
</reference>
<reference evidence="73 74" key="65">
    <citation type="journal article" date="2021" name="Nat. Commun.">
        <title>Molecular basis for redox control by the human cystine/glutamate antiporter system xc.</title>
        <authorList>
            <person name="Parker J.L."/>
            <person name="Deme J.C."/>
            <person name="Kolokouris D."/>
            <person name="Kuteyi G."/>
            <person name="Biggin P.C."/>
            <person name="Lea S.M."/>
            <person name="Newstead S."/>
        </authorList>
    </citation>
    <scope>STRUCTURE BY ELECTRON MICROSCOPY (3.40 ANGSTROMS) OF 2-630 IN COMPLEX WITH SLC7A11</scope>
    <scope>GLYCOSYLATION AT ASN-365; ASN-381; ASN-424 AND ASN-506</scope>
</reference>
<reference evidence="72" key="66">
    <citation type="journal article" date="2022" name="Cell Res.">
        <title>The structure of erastin-bound xCT-4F2hc complexreveals molecular mechanisms underlying erastin-induced ferroptosis.</title>
        <authorList>
            <person name="Yan R."/>
            <person name="Xie E."/>
            <person name="Li Y."/>
            <person name="Li J."/>
            <person name="Zhang Y."/>
            <person name="Chi X."/>
            <person name="Hu X."/>
            <person name="Xu L."/>
            <person name="Hou T."/>
            <person name="Stockwell B.R."/>
            <person name="Min J."/>
            <person name="Zhou Q."/>
            <person name="Wang F."/>
        </authorList>
    </citation>
    <scope>STRUCTURE BY ELECTRON MICROSCOPY (3.40 ANGSTROMS) OF 2-630 IN COMPLEX WITH SLC7A11</scope>
    <scope>DISULFIDE BOND</scope>
    <scope>GLYCOSYLATION AT ASN-365; ASN-381; ASN-424 AND ASN-506</scope>
</reference>
<sequence length="630" mass="67994">MELQPPEASIAVVSIPRQLPGSHSEAGVQGLSAGDDSELGSHCVAQTGLELLASGDPLPSASQNAEMIETGSDCVTQAGLQLLASSDPPALASKNAEVTGTMSQDTEVDMKEVELNELEPEKQPMNAASGAAMSLAGAEKNGLVKIKVAEDEAEAAAAAKFTGLSKEELLKVAGSPGWVRTRWALLLLFWLGWLGMLAGAVVIIVRAPRCRELPAQKWWHTGALYRIGDLQAFQGHGAGNLAGLKGRLDYLSSLKVKGLVLGPIHKNQKDDVAQTDLLQIDPNFGSKEDFDSLLQSAKKKSIRVILDLTPNYRGENSWFSTQVDTVATKVKDALEFWLQAGVDGFQVRDIENLKDASSFLAEWQNITKGFSEDRLLIAGTNSSDLQQILSLLESNKDLLLTSSYLSDSGSTGEHTKSLVTQYLNATGNRWCSWSLSQARLLTSFLPAQLLRLYQLMLFTLPGTPVFSYGDEIGLDAAALPGQPMEAPVMLWDESSFPDIPGAVSANMTVKGQSEDPGSLLSLFRRLSDQRSKERSLLHGDFHAFSAGPGLFSYIRHWDQNERFLVVLNFGDVGLSAGLQASDLPASASLPAKADLLLSTQPGREEGSPLELERLKLEPHEGLLLRFPYAA</sequence>
<name>4F2_HUMAN</name>
<feature type="chain" id="PRO_0000064383" description="Amino acid transporter heavy chain SLC3A2">
    <location>
        <begin position="1"/>
        <end position="630"/>
    </location>
</feature>
<feature type="topological domain" description="Cytoplasmic" evidence="8 38">
    <location>
        <begin position="102"/>
        <end position="184"/>
    </location>
</feature>
<feature type="transmembrane region" description="Helical; Signal-anchor for type II membrane protein" evidence="38">
    <location>
        <begin position="185"/>
        <end position="205"/>
    </location>
</feature>
<feature type="topological domain" description="Extracellular" evidence="8 38">
    <location>
        <begin position="206"/>
        <end position="630"/>
    </location>
</feature>
<feature type="region of interest" description="Disordered" evidence="4">
    <location>
        <begin position="15"/>
        <end position="39"/>
    </location>
</feature>
<feature type="modified residue" description="N-acetylmethionine" evidence="52 79">
    <location>
        <position position="1"/>
    </location>
</feature>
<feature type="modified residue" description="Phosphoserine" evidence="80">
    <location>
        <position position="103"/>
    </location>
</feature>
<feature type="modified residue" description="Phosphothreonine" evidence="3">
    <location>
        <position position="106"/>
    </location>
</feature>
<feature type="modified residue" description="Phosphoserine" evidence="80">
    <location>
        <position position="134"/>
    </location>
</feature>
<feature type="modified residue" description="Phosphoserine" evidence="76 80">
    <location>
        <position position="165"/>
    </location>
</feature>
<feature type="modified residue" description="Phosphoserine" evidence="62">
    <location>
        <position position="406"/>
    </location>
</feature>
<feature type="modified residue" description="Phosphoserine" evidence="62">
    <location>
        <position position="408"/>
    </location>
</feature>
<feature type="modified residue" description="Phosphoserine" evidence="62">
    <location>
        <position position="410"/>
    </location>
</feature>
<feature type="modified residue" description="Phosphoserine" evidence="62">
    <location>
        <position position="527"/>
    </location>
</feature>
<feature type="modified residue" description="Phosphoserine" evidence="62">
    <location>
        <position position="531"/>
    </location>
</feature>
<feature type="glycosylation site" description="N-linked (GlcNAc...) asparagine" evidence="20 31 33 38 41 42 46 47 64 67 68 72 74">
    <location>
        <position position="365"/>
    </location>
</feature>
<feature type="glycosylation site" description="N-linked (GlcNAc...) asparagine" evidence="20 25 31 33 38 41 42 46 47 64 67 68 72 74">
    <location>
        <position position="381"/>
    </location>
</feature>
<feature type="glycosylation site" description="N-linked (GlcNAc...) (complex) asparagine" evidence="20 25 30 33 38 41 42 46 47 64 67 68 72 74">
    <location>
        <position position="424"/>
    </location>
</feature>
<feature type="glycosylation site" description="N-linked (GlcNAc...) asparagine" evidence="31 33 38 41 42 46 47 64 66 68 72 74">
    <location>
        <position position="506"/>
    </location>
</feature>
<feature type="disulfide bond" description="Interchain (with C-164 in SLC7A5; C-158 in SLC7A11 and C-154 in SLC7A8)" evidence="38 41 47 61 72">
    <location>
        <position position="210"/>
    </location>
</feature>
<feature type="cross-link" description="Glycyl lysine isopeptide (Lys-Gly) (interchain with G-Cter in ubiquitin)">
    <location>
        <position position="147"/>
    </location>
</feature>
<feature type="cross-link" description="Glycyl lysine isopeptide (Lys-Gly) (interchain with G-Cter in SUMO2)" evidence="81">
    <location>
        <position position="166"/>
    </location>
</feature>
<feature type="splice variant" id="VSP_037907" description="In isoform 2." evidence="53 56 57 58">
    <location>
        <begin position="1"/>
        <end position="101"/>
    </location>
</feature>
<feature type="splice variant" id="VSP_037908" description="In isoform 3." evidence="55">
    <location>
        <begin position="38"/>
        <end position="99"/>
    </location>
</feature>
<feature type="splice variant" id="VSP_061769" description="In isoform 5.">
    <original>LGSHCVAQTGLELLASGDPLPSASQNAEMIETGSDCVTQAGLQLLASSDPPALASKNAEV</original>
    <variation>TGSDCVTQAGLQLLASSDPPALASKNAEVTVETGFHHVSQADIEFLTSIDPTASASGSAGI</variation>
    <location>
        <begin position="39"/>
        <end position="98"/>
    </location>
</feature>
<feature type="splice variant" id="VSP_037909" description="In isoform 4." evidence="59">
    <original>V</original>
    <variation>VTETGFHHVSQADIEFLTSIDPTASASGSAGI</variation>
    <location>
        <position position="98"/>
    </location>
</feature>
<feature type="mutagenesis site" description="Strongly decreased leucine transport activity." evidence="38">
    <original>R</original>
    <variation>A</variation>
    <variation>E</variation>
    <variation>K</variation>
    <variation>L</variation>
    <location>
        <position position="182"/>
    </location>
</feature>
<feature type="mutagenesis site" description="Abolishes dimerization, leucine uptake and interaction with beta-1 integrins." evidence="13 28 50">
    <original>C</original>
    <variation>S</variation>
    <location>
        <position position="210"/>
    </location>
</feature>
<feature type="mutagenesis site" description="Nearly abolishes leucine transport activity." evidence="38">
    <location>
        <begin position="234"/>
        <end position="630"/>
    </location>
</feature>
<feature type="mutagenesis site" description="Impairs both the stability and the trafficking of SLC3A2 to the plasma membrane; when associated with Q-381; Q-424 and Q-506." evidence="48">
    <original>N</original>
    <variation>Q</variation>
    <location>
        <position position="365"/>
    </location>
</feature>
<feature type="mutagenesis site" description="Impairs both the stability and the trafficking of SLC3A2 to the plasma membrane; when associated with Q-365; Q-424 and Q-506." evidence="48">
    <original>N</original>
    <variation>Q</variation>
    <location>
        <position position="381"/>
    </location>
</feature>
<feature type="mutagenesis site" description="Impairs both the stability and the trafficking of SLC3A2 to the plasma membrane; when associated with Q-365 Q-381 and Q-506." evidence="48">
    <original>N</original>
    <variation>Q</variation>
    <location>
        <position position="424"/>
    </location>
</feature>
<feature type="mutagenesis site" description="No effect on dimerization, leucine uptake or interaction with beta-1 integrins." evidence="13 50">
    <original>C</original>
    <variation>S</variation>
    <location>
        <position position="431"/>
    </location>
</feature>
<feature type="mutagenesis site" description="Impairs both the stability and the trafficking of SLC3A2 to the plasma membrane; when associated with Q-365 Q-381 and Q-424." evidence="48">
    <original>N</original>
    <variation>Q</variation>
    <location>
        <position position="506"/>
    </location>
</feature>
<feature type="mutagenesis site" description="Strongly decreased leucine transport activity." evidence="38">
    <original>K</original>
    <variation>E</variation>
    <location>
        <position position="532"/>
    </location>
</feature>
<feature type="sequence conflict" description="In Ref. 4; AAA35536." evidence="60" ref="4">
    <original>G</original>
    <variation>E</variation>
    <location>
        <position position="137"/>
    </location>
</feature>
<feature type="sequence conflict" description="In Ref. 3; AAA51540." evidence="60" ref="3">
    <original>A</original>
    <variation>P</variation>
    <location>
        <position position="158"/>
    </location>
</feature>
<feature type="sequence conflict" description="In Ref. 4; AAA35536." evidence="60" ref="4">
    <original>A</original>
    <variation>P</variation>
    <location>
        <position position="223"/>
    </location>
</feature>
<feature type="sequence conflict" description="In Ref. 4; AAA35536." evidence="60" ref="4">
    <original>E</original>
    <variation>D</variation>
    <location>
        <position position="315"/>
    </location>
</feature>
<feature type="sequence conflict" description="In Ref. 5; AAA35489." evidence="60" ref="5">
    <original>S</original>
    <variation>F</variation>
    <location>
        <position position="320"/>
    </location>
</feature>
<feature type="sequence conflict" description="In Ref. 4; AAA35536." evidence="60" ref="4">
    <original>E</original>
    <variation>G</variation>
    <location>
        <position position="372"/>
    </location>
</feature>
<feature type="sequence conflict" description="In Ref. 4; AAA35536." evidence="60" ref="4">
    <original>GE</original>
    <variation>PQ</variation>
    <location>
        <begin position="412"/>
        <end position="413"/>
    </location>
</feature>
<feature type="sequence conflict" description="In Ref. 4; AAA35536." evidence="60" ref="4">
    <original>V</original>
    <variation>L</variation>
    <location>
        <position position="465"/>
    </location>
</feature>
<feature type="sequence conflict" description="In Ref. 4; AAA35536." evidence="60" ref="4">
    <original>G</original>
    <variation>P</variation>
    <location>
        <position position="481"/>
    </location>
</feature>
<feature type="sequence conflict" description="In Ref. 5; AAA35489." evidence="60" ref="5">
    <original>G</original>
    <variation>E</variation>
    <location>
        <position position="549"/>
    </location>
</feature>
<feature type="sequence conflict" description="In Ref. 4; AAA35536." evidence="60" ref="4">
    <original>L</original>
    <variation>P</variation>
    <location>
        <position position="609"/>
    </location>
</feature>
<feature type="sequence conflict" description="In Ref. 4; AAA35536." evidence="60" ref="4">
    <original>E</original>
    <variation>G</variation>
    <location>
        <position position="612"/>
    </location>
</feature>
<feature type="helix" evidence="85">
    <location>
        <begin position="167"/>
        <end position="173"/>
    </location>
</feature>
<feature type="strand" evidence="91">
    <location>
        <begin position="175"/>
        <end position="177"/>
    </location>
</feature>
<feature type="helix" evidence="85">
    <location>
        <begin position="178"/>
        <end position="181"/>
    </location>
</feature>
<feature type="helix" evidence="85">
    <location>
        <begin position="183"/>
        <end position="206"/>
    </location>
</feature>
<feature type="helix" evidence="84">
    <location>
        <begin position="218"/>
        <end position="220"/>
    </location>
</feature>
<feature type="strand" evidence="84">
    <location>
        <begin position="224"/>
        <end position="227"/>
    </location>
</feature>
<feature type="helix" evidence="84">
    <location>
        <begin position="230"/>
        <end position="234"/>
    </location>
</feature>
<feature type="helix" evidence="85">
    <location>
        <begin position="236"/>
        <end position="238"/>
    </location>
</feature>
<feature type="helix" evidence="84">
    <location>
        <begin position="241"/>
        <end position="245"/>
    </location>
</feature>
<feature type="helix" evidence="84">
    <location>
        <begin position="248"/>
        <end position="253"/>
    </location>
</feature>
<feature type="strand" evidence="84">
    <location>
        <begin position="257"/>
        <end position="261"/>
    </location>
</feature>
<feature type="strand" evidence="84">
    <location>
        <begin position="265"/>
        <end position="267"/>
    </location>
</feature>
<feature type="turn" evidence="87">
    <location>
        <begin position="272"/>
        <end position="274"/>
    </location>
</feature>
<feature type="strand" evidence="84">
    <location>
        <begin position="275"/>
        <end position="280"/>
    </location>
</feature>
<feature type="helix" evidence="84">
    <location>
        <begin position="282"/>
        <end position="284"/>
    </location>
</feature>
<feature type="helix" evidence="84">
    <location>
        <begin position="287"/>
        <end position="299"/>
    </location>
</feature>
<feature type="strand" evidence="84">
    <location>
        <begin position="303"/>
        <end position="307"/>
    </location>
</feature>
<feature type="turn" evidence="84">
    <location>
        <begin position="310"/>
        <end position="313"/>
    </location>
</feature>
<feature type="strand" evidence="84">
    <location>
        <begin position="314"/>
        <end position="316"/>
    </location>
</feature>
<feature type="strand" evidence="83">
    <location>
        <begin position="319"/>
        <end position="321"/>
    </location>
</feature>
<feature type="helix" evidence="84">
    <location>
        <begin position="323"/>
        <end position="340"/>
    </location>
</feature>
<feature type="strand" evidence="84">
    <location>
        <begin position="344"/>
        <end position="347"/>
    </location>
</feature>
<feature type="helix" evidence="84">
    <location>
        <begin position="350"/>
        <end position="352"/>
    </location>
</feature>
<feature type="strand" evidence="93">
    <location>
        <begin position="353"/>
        <end position="355"/>
    </location>
</feature>
<feature type="helix" evidence="84">
    <location>
        <begin position="356"/>
        <end position="370"/>
    </location>
</feature>
<feature type="strand" evidence="84">
    <location>
        <begin position="375"/>
        <end position="379"/>
    </location>
</feature>
<feature type="helix" evidence="84">
    <location>
        <begin position="385"/>
        <end position="392"/>
    </location>
</feature>
<feature type="turn" evidence="86">
    <location>
        <begin position="393"/>
        <end position="395"/>
    </location>
</feature>
<feature type="strand" evidence="84">
    <location>
        <begin position="399"/>
        <end position="401"/>
    </location>
</feature>
<feature type="strand" evidence="88">
    <location>
        <begin position="403"/>
        <end position="405"/>
    </location>
</feature>
<feature type="strand" evidence="84">
    <location>
        <begin position="406"/>
        <end position="408"/>
    </location>
</feature>
<feature type="helix" evidence="84">
    <location>
        <begin position="412"/>
        <end position="425"/>
    </location>
</feature>
<feature type="turn" evidence="84">
    <location>
        <begin position="426"/>
        <end position="428"/>
    </location>
</feature>
<feature type="strand" evidence="85">
    <location>
        <begin position="431"/>
        <end position="433"/>
    </location>
</feature>
<feature type="strand" evidence="90">
    <location>
        <begin position="437"/>
        <end position="439"/>
    </location>
</feature>
<feature type="helix" evidence="84">
    <location>
        <begin position="441"/>
        <end position="443"/>
    </location>
</feature>
<feature type="helix" evidence="84">
    <location>
        <begin position="447"/>
        <end position="449"/>
    </location>
</feature>
<feature type="helix" evidence="84">
    <location>
        <begin position="450"/>
        <end position="457"/>
    </location>
</feature>
<feature type="strand" evidence="84">
    <location>
        <begin position="460"/>
        <end position="467"/>
    </location>
</feature>
<feature type="helix" evidence="84">
    <location>
        <begin position="470"/>
        <end position="472"/>
    </location>
</feature>
<feature type="helix" evidence="84">
    <location>
        <begin position="476"/>
        <end position="478"/>
    </location>
</feature>
<feature type="strand" evidence="82">
    <location>
        <begin position="479"/>
        <end position="481"/>
    </location>
</feature>
<feature type="strand" evidence="82">
    <location>
        <begin position="484"/>
        <end position="486"/>
    </location>
</feature>
<feature type="helix" evidence="83">
    <location>
        <begin position="493"/>
        <end position="495"/>
    </location>
</feature>
<feature type="strand" evidence="92">
    <location>
        <begin position="497"/>
        <end position="499"/>
    </location>
</feature>
<feature type="helix" evidence="83">
    <location>
        <begin position="500"/>
        <end position="502"/>
    </location>
</feature>
<feature type="helix" evidence="84">
    <location>
        <begin position="505"/>
        <end position="507"/>
    </location>
</feature>
<feature type="helix" evidence="84">
    <location>
        <begin position="509"/>
        <end position="513"/>
    </location>
</feature>
<feature type="strand" evidence="89">
    <location>
        <begin position="516"/>
        <end position="518"/>
    </location>
</feature>
<feature type="helix" evidence="84">
    <location>
        <begin position="519"/>
        <end position="530"/>
    </location>
</feature>
<feature type="helix" evidence="84">
    <location>
        <begin position="534"/>
        <end position="538"/>
    </location>
</feature>
<feature type="strand" evidence="84">
    <location>
        <begin position="540"/>
        <end position="543"/>
    </location>
</feature>
<feature type="strand" evidence="85">
    <location>
        <begin position="547"/>
        <end position="549"/>
    </location>
</feature>
<feature type="strand" evidence="84">
    <location>
        <begin position="550"/>
        <end position="556"/>
    </location>
</feature>
<feature type="strand" evidence="85">
    <location>
        <begin position="558"/>
        <end position="560"/>
    </location>
</feature>
<feature type="strand" evidence="84">
    <location>
        <begin position="562"/>
        <end position="568"/>
    </location>
</feature>
<feature type="strand" evidence="84">
    <location>
        <begin position="570"/>
        <end position="572"/>
    </location>
</feature>
<feature type="helix" evidence="84">
    <location>
        <begin position="580"/>
        <end position="582"/>
    </location>
</feature>
<feature type="helix" evidence="82">
    <location>
        <begin position="585"/>
        <end position="587"/>
    </location>
</feature>
<feature type="strand" evidence="84">
    <location>
        <begin position="591"/>
        <end position="603"/>
    </location>
</feature>
<feature type="strand" evidence="84">
    <location>
        <begin position="607"/>
        <end position="610"/>
    </location>
</feature>
<feature type="helix" evidence="84">
    <location>
        <begin position="611"/>
        <end position="613"/>
    </location>
</feature>
<feature type="strand" evidence="84">
    <location>
        <begin position="621"/>
        <end position="626"/>
    </location>
</feature>
<feature type="initiator methionine" description="Removed" evidence="75 77 78">
    <location sequence="P08195-2">
        <position position="1"/>
    </location>
</feature>
<feature type="modified residue" description="N-acetylserine" evidence="75 77 78">
    <location sequence="P08195-2">
        <position position="2"/>
    </location>
</feature>
<feature type="modified residue" description="Phosphoserine" evidence="77">
    <location sequence="P08195-2">
        <position position="2"/>
    </location>
</feature>
<proteinExistence type="evidence at protein level"/>
<comment type="function">
    <text evidence="2 5 6 7 8 9 10 11 12 14 16 17 19 22 23 24 35 38 40 41 42 46 49 50 51">Acts as a chaperone that facilitates biogenesis and trafficking of functional transporters heterodimers to the plasma membrane. Forms heterodimer with SLC7 family transporters (SLC7A5, SLC7A6, SLC7A7, SLC7A8, SLC7A10 and SLC7A11), a group of amino-acid antiporters (PubMed:10574970, PubMed:10903140, PubMed:11557028, PubMed:30867591, PubMed:33298890, PubMed:33758168, PubMed:34880232, PubMed:9751058, PubMed:9829974, PubMed:9878049). Heterodimers function as amino acids exchangers, the specificity of the substrate depending on the SLC7A subunit. Heterodimers SLC3A2/SLC7A6 or SLC3A2/SLC7A7 mediate the uptake of dibasic amino acids (PubMed:10903140, PubMed:9829974). Heterodimer SLC3A2/SLC7A11 functions as an antiporter by mediating the exchange of extracellular anionic L-cystine and intracellular L-glutamate across the cellular plasma membrane (PubMed:34880232). SLC3A2/SLC7A10 translocates small neutral L- and D-amino acids across the plasma membrane (By similarity). SLC3A2/SLC75 or SLC3A2/SLC7A8 translocates neutral amino acids with broad specificity, thyroid hormones and L-DOPA (PubMed:10574970, PubMed:11389679, PubMed:11557028, PubMed:11564694, PubMed:11742812, PubMed:12117417, PubMed:12225859, PubMed:12716892, PubMed:15980244, PubMed:30867591, PubMed:33298890, PubMed:33758168). SLC3A2 is essential for plasma membrane localization, stability, and the transport activity of SLC7A5 and SLC7A8 (PubMed:10391915, PubMed:10574970, PubMed:11311135, PubMed:15769744, PubMed:33066406). When associated with LAPTM4B, the heterodimer SLC7A5 is recruited to lysosomes to promote leucine uptake into these organelles, and thereby mediates mTORC1 activation (PubMed:25998567). Modulates integrin-related signaling and is essential for integrin-dependent cell spreading, migration and tumor progression (PubMed:11121428, PubMed:15625115).</text>
</comment>
<comment type="function">
    <text evidence="37">(Microbial infection) In case of hepatitis C virus/HCV infection, the complex formed by SLC3A2 and SLC7A5/LAT1 plays a role in HCV propagation by facilitating viral entry into host cell and increasing L-leucine uptake-mediated mTORC1 signaling activation, thereby contributing to HCV-mediated pathogenesis.</text>
</comment>
<comment type="function">
    <text evidence="43">(Microbial infection) Acts as a receptor for malaria parasite Plasmodium vivax (Thai isolate) in immature red blood cells.</text>
</comment>
<comment type="subunit">
    <text evidence="6 7 9 10 11 12 13 16 17 18 19 21 23 28 35 38 41 42 46 47 49 50 51">Disulfide-linked heterodimer with a non-glycosylated catalytic light subunit (SLC7A5, SLC7A6, SLC7A7, SLC7A8, SLC7A10 or SLC7A11) (PubMed:10574970, PubMed:10903140, PubMed:11311135, PubMed:11557028, PubMed:12117417, PubMed:12225859, PubMed:15769744, PubMed:30867591, PubMed:33298890, PubMed:33758168, PubMed:34880232, PubMed:35352032, PubMed:9751058, PubMed:9829974). Interacts with TLCD3A/CT120 (PubMed:12270127). Interacts with ICAM1 (PubMed:12716892). Constitutively and specifically associates with beta-1 integrins (alpha-2/beta-1, alpha-3/beta-1, alpha-5/beta-1 and alpha-6/beta-1), but minimally with alpha-4/beta-1 (PubMed:11696247). Interacts with LAPTM4B; recruits SLC3A2 and SLC7A5/LAT1 to lysosomes to promote leucine uptake into these organelles and is required for mTORC1 activation (PubMed:25998567).</text>
</comment>
<comment type="subunit">
    <text evidence="37">(Microbial infection) Interacts with hepatitis C virus/HCV envelope glycoprotein E2; the interaction may facilitate viral entry into host cell.</text>
</comment>
<comment type="interaction">
    <interactant intactId="EBI-702356">
        <id>P08195</id>
    </interactant>
    <interactant intactId="EBI-15639515">
        <id>O15354</id>
        <label>GPR37</label>
    </interactant>
    <organismsDiffer>false</organismsDiffer>
    <experiments>3</experiments>
</comment>
<comment type="interaction">
    <interactant intactId="EBI-702356">
        <id>P08195</id>
    </interactant>
    <interactant intactId="EBI-3843348">
        <id>Q9UPY5</id>
        <label>SLC7A11</label>
    </interactant>
    <organismsDiffer>false</organismsDiffer>
    <experiments>2</experiments>
</comment>
<comment type="interaction">
    <interactant intactId="EBI-702356">
        <id>P08195</id>
    </interactant>
    <interactant intactId="EBI-6138761">
        <id>Q01650</id>
        <label>SLC7A5</label>
    </interactant>
    <organismsDiffer>false</organismsDiffer>
    <experiments>3</experiments>
</comment>
<comment type="interaction">
    <interactant intactId="EBI-702356">
        <id>P08195</id>
    </interactant>
    <interactant intactId="EBI-2849880">
        <id>Q9UM01</id>
        <label>SLC7A7</label>
    </interactant>
    <organismsDiffer>false</organismsDiffer>
    <experiments>2</experiments>
</comment>
<comment type="interaction">
    <interactant intactId="EBI-702356">
        <id>P08195</id>
    </interactant>
    <interactant intactId="EBI-14022357">
        <id>O52302</id>
        <label>sepZ</label>
    </interactant>
    <organismsDiffer>true</organismsDiffer>
    <experiments>5</experiments>
</comment>
<comment type="interaction">
    <interactant intactId="EBI-11614088">
        <id>P08195-1</id>
    </interactant>
    <interactant intactId="EBI-6138761">
        <id>Q01650</id>
        <label>SLC7A5</label>
    </interactant>
    <organismsDiffer>false</organismsDiffer>
    <experiments>3</experiments>
</comment>
<comment type="interaction">
    <interactant intactId="EBI-12832276">
        <id>P08195-4</id>
    </interactant>
    <interactant intactId="EBI-715104">
        <id>Q9NX09</id>
        <label>DDIT4</label>
    </interactant>
    <organismsDiffer>false</organismsDiffer>
    <experiments>3</experiments>
</comment>
<comment type="interaction">
    <interactant intactId="EBI-12832276">
        <id>P08195-4</id>
    </interactant>
    <interactant intactId="EBI-3915253">
        <id>Q15125</id>
        <label>EBP</label>
    </interactant>
    <organismsDiffer>false</organismsDiffer>
    <experiments>3</experiments>
</comment>
<comment type="interaction">
    <interactant intactId="EBI-12832276">
        <id>P08195-4</id>
    </interactant>
    <interactant intactId="EBI-9641086">
        <id>P21333-2</id>
        <label>FLNA</label>
    </interactant>
    <organismsDiffer>false</organismsDiffer>
    <experiments>3</experiments>
</comment>
<comment type="interaction">
    <interactant intactId="EBI-12832276">
        <id>P08195-4</id>
    </interactant>
    <interactant intactId="EBI-352682">
        <id>P04792</id>
        <label>HSPB1</label>
    </interactant>
    <organismsDiffer>false</organismsDiffer>
    <experiments>3</experiments>
</comment>
<comment type="interaction">
    <interactant intactId="EBI-12832276">
        <id>P08195-4</id>
    </interactant>
    <interactant intactId="EBI-10975473">
        <id>O60333-2</id>
        <label>KIF1B</label>
    </interactant>
    <organismsDiffer>false</organismsDiffer>
    <experiments>3</experiments>
</comment>
<comment type="interaction">
    <interactant intactId="EBI-12832276">
        <id>P08195-4</id>
    </interactant>
    <interactant intactId="EBI-473196">
        <id>Q5T3J3</id>
        <label>LRIF1</label>
    </interactant>
    <organismsDiffer>false</organismsDiffer>
    <experiments>3</experiments>
</comment>
<comment type="interaction">
    <interactant intactId="EBI-12832276">
        <id>P08195-4</id>
    </interactant>
    <interactant intactId="EBI-1050743">
        <id>P31153</id>
        <label>MAT2A</label>
    </interactant>
    <organismsDiffer>false</organismsDiffer>
    <experiments>3</experiments>
</comment>
<comment type="interaction">
    <interactant intactId="EBI-12832276">
        <id>P08195-4</id>
    </interactant>
    <interactant intactId="EBI-3843348">
        <id>Q9UPY5</id>
        <label>SLC7A11</label>
    </interactant>
    <organismsDiffer>false</organismsDiffer>
    <experiments>3</experiments>
</comment>
<comment type="interaction">
    <interactant intactId="EBI-12832276">
        <id>P08195-4</id>
    </interactant>
    <interactant intactId="EBI-13292283">
        <id>Q9UHI5</id>
        <label>SLC7A8</label>
    </interactant>
    <organismsDiffer>false</organismsDiffer>
    <experiments>3</experiments>
</comment>
<comment type="interaction">
    <interactant intactId="EBI-12832276">
        <id>P08195-4</id>
    </interactant>
    <interactant intactId="EBI-720609">
        <id>O76024</id>
        <label>WFS1</label>
    </interactant>
    <organismsDiffer>false</organismsDiffer>
    <experiments>3</experiments>
</comment>
<comment type="interaction">
    <interactant intactId="EBI-12832276">
        <id>P08195-4</id>
    </interactant>
    <interactant intactId="EBI-25872486">
        <id>Q96BH6</id>
    </interactant>
    <organismsDiffer>false</organismsDiffer>
    <experiments>3</experiments>
</comment>
<comment type="subcellular location">
    <subcellularLocation>
        <location evidence="14">Apical cell membrane</location>
    </subcellularLocation>
    <subcellularLocation>
        <location evidence="9 10 11 12 17 23 26 35 44 45 48 50">Cell membrane</location>
        <topology evidence="38">Single-pass type II membrane protein</topology>
    </subcellularLocation>
    <subcellularLocation>
        <location evidence="1">Cell junction</location>
    </subcellularLocation>
    <subcellularLocation>
        <location evidence="35">Lysosome membrane</location>
    </subcellularLocation>
    <subcellularLocation>
        <location evidence="27">Melanosome</location>
    </subcellularLocation>
    <subcellularLocation>
        <location evidence="1">Basolateral cell membrane</location>
    </subcellularLocation>
    <text evidence="1 9 14 27 35 49">Localized at the plasma membrane when associated with SLC7A5/LAT1 or SLC7A8/LAT2 (PubMed:11311135, PubMed:9751058). Localized to the apical membrane of placental syncytiotrophoblastic cells (PubMed:11742812). Recruited to lysosomes by LAPTM4B (PubMed:25998567). Identified by mass spectrometry in melanosome fractions from stage I to stage IV (PubMed:17081065). Located selectively at cell-cell adhesion sites (By similarity). Colocalized with SLC7A8/LAT2 at the basolateral membrane of kidney proximal tubules and small intestine epithelia. Expressed in both luminal and abluminal membranes of brain capillary endothelial cells (By similarity).</text>
</comment>
<comment type="alternative products">
    <event type="alternative splicing"/>
    <isoform>
        <id>P08195-1</id>
        <name>1</name>
        <sequence type="displayed"/>
    </isoform>
    <isoform>
        <id>P08195-2</id>
        <name>2</name>
        <sequence type="described" ref="VSP_037907"/>
    </isoform>
    <isoform>
        <id>P08195-3</id>
        <name>3</name>
        <sequence type="described" ref="VSP_037908"/>
    </isoform>
    <isoform>
        <id>P08195-4</id>
        <name>4</name>
        <sequence type="described" ref="VSP_037909"/>
    </isoform>
    <isoform>
        <id>P08195-5</id>
        <name>5</name>
        <sequence type="described" ref="VSP_061769"/>
    </isoform>
</comment>
<comment type="tissue specificity">
    <text evidence="10 11 14 19 21 24 26 39 45">Expressed ubiquitously in all tissues tested with highest levels detected in kidney, placenta and testis and weakest level in thymus. During gestation, expression in the placenta was significantly stronger at full-term than at the mid-trimester stage. Expressed in HUVECS and at low levels in resting peripheral blood T-lymphocytes and quiescent fibroblasts. Also expressed in fetal liver and in the astrocytic process of primary astrocytic gliomas. Expressed in retinal endothelial cells and in the intestinal epithelial cell line C2BBe1.</text>
</comment>
<comment type="induction">
    <text evidence="14 32 34 36 37 39 45">Expression is induced in resting peripheral blood T-lymphocytes following PHA stimulation. Expression increases at the time of maximal DNA synthesis, in fibroblasts stimulated to divide. Expression and the uptake of leucine is stimulated in mononuclear, cytotrophoblast-like choriocarcinoma cells by combined treatment with PMA and calcium ionophore. Up-regulated in response to hydrogen peroxide (PubMed:30341327). Highly expressed in various cancer types (PubMed:19292886, PubMed:23116296, PubMed:28350098).</text>
</comment>
<comment type="induction">
    <text evidence="37">(Microbial infection) Up-regulated upon hepatitis C virus/HCV infection via NS3-A4 viral protein complex; the up-regulation is mediated by oxidative stress (PubMed:30341327). Up-regulation of the complex formed by SLC3A2 and SLC7A5/LAT1 upon hepatitis C virus/HCV infection (PubMed:30341327).</text>
</comment>
<comment type="PTM">
    <text evidence="48">N-glycosylated; N-glycosylation is crucial for trafficking and stability of SLC3A2 to the plasma membrane.</text>
</comment>
<comment type="PTM">
    <text evidence="29">Phosphorylation on Ser-406; Ser-408 or Ser-410 and on Ser-527 or Ser-531 by ecto-protein kinases favors heterotypic cell-cell interactions.</text>
</comment>
<comment type="mass spectrometry" mass="57944.93" method="MALDI" evidence="15"/>
<comment type="similarity">
    <text evidence="60">Belongs to the SLC3A transporter family.</text>
</comment>
<protein>
    <recommendedName>
        <fullName evidence="60">Amino acid transporter heavy chain SLC3A2</fullName>
    </recommendedName>
    <alternativeName>
        <fullName evidence="57">4F2 cell-surface antigen heavy chain</fullName>
        <shortName evidence="53">4F2hc</shortName>
    </alternativeName>
    <alternativeName>
        <fullName evidence="56">4F2 heavy chain antigen</fullName>
    </alternativeName>
    <alternativeName>
        <fullName evidence="58">Lymphocyte activation antigen 4F2 large subunit</fullName>
    </alternativeName>
    <alternativeName>
        <fullName evidence="54">Solute carrier family 3 member 2</fullName>
    </alternativeName>
    <cdAntigenName>CD98</cdAntigenName>
</protein>
<gene>
    <name evidence="63" type="primary">SLC3A2</name>
    <name type="synonym">MDU1</name>
</gene>
<dbReference type="EMBL" id="J02939">
    <property type="protein sequence ID" value="AAA52497.1"/>
    <property type="molecule type" value="mRNA"/>
</dbReference>
<dbReference type="EMBL" id="J02769">
    <property type="protein sequence ID" value="AAA51540.1"/>
    <property type="molecule type" value="mRNA"/>
</dbReference>
<dbReference type="EMBL" id="J03569">
    <property type="protein sequence ID" value="AAA35536.1"/>
    <property type="molecule type" value="mRNA"/>
</dbReference>
<dbReference type="EMBL" id="M21904">
    <property type="protein sequence ID" value="AAA35489.1"/>
    <property type="molecule type" value="Genomic_DNA"/>
</dbReference>
<dbReference type="EMBL" id="M21898">
    <property type="protein sequence ID" value="AAA35489.1"/>
    <property type="status" value="JOINED"/>
    <property type="molecule type" value="Genomic_DNA"/>
</dbReference>
<dbReference type="EMBL" id="M21899">
    <property type="protein sequence ID" value="AAA35489.1"/>
    <property type="status" value="JOINED"/>
    <property type="molecule type" value="Genomic_DNA"/>
</dbReference>
<dbReference type="EMBL" id="M21900">
    <property type="protein sequence ID" value="AAA35489.1"/>
    <property type="status" value="JOINED"/>
    <property type="molecule type" value="Genomic_DNA"/>
</dbReference>
<dbReference type="EMBL" id="M21901">
    <property type="protein sequence ID" value="AAA35489.1"/>
    <property type="status" value="JOINED"/>
    <property type="molecule type" value="Genomic_DNA"/>
</dbReference>
<dbReference type="EMBL" id="M21902">
    <property type="protein sequence ID" value="AAA35489.1"/>
    <property type="status" value="JOINED"/>
    <property type="molecule type" value="Genomic_DNA"/>
</dbReference>
<dbReference type="EMBL" id="M21903">
    <property type="protein sequence ID" value="AAA35489.1"/>
    <property type="status" value="JOINED"/>
    <property type="molecule type" value="Genomic_DNA"/>
</dbReference>
<dbReference type="EMBL" id="AB018010">
    <property type="protein sequence ID" value="BAA84649.1"/>
    <property type="molecule type" value="mRNA"/>
</dbReference>
<dbReference type="EMBL" id="AP001160">
    <property type="status" value="NOT_ANNOTATED_CDS"/>
    <property type="molecule type" value="Genomic_DNA"/>
</dbReference>
<dbReference type="EMBL" id="CH471076">
    <property type="protein sequence ID" value="EAW74118.1"/>
    <property type="molecule type" value="Genomic_DNA"/>
</dbReference>
<dbReference type="EMBL" id="BC001061">
    <property type="protein sequence ID" value="AAH01061.2"/>
    <property type="molecule type" value="mRNA"/>
</dbReference>
<dbReference type="EMBL" id="BC003000">
    <property type="protein sequence ID" value="AAH03000.2"/>
    <property type="molecule type" value="mRNA"/>
</dbReference>
<dbReference type="EMBL" id="BE794697">
    <property type="status" value="NOT_ANNOTATED_CDS"/>
    <property type="molecule type" value="mRNA"/>
</dbReference>
<dbReference type="CCDS" id="CCDS31588.1">
    <molecule id="P08195-5"/>
</dbReference>
<dbReference type="CCDS" id="CCDS31589.1">
    <molecule id="P08195-3"/>
</dbReference>
<dbReference type="CCDS" id="CCDS31590.1">
    <molecule id="P08195-2"/>
</dbReference>
<dbReference type="CCDS" id="CCDS8039.2">
    <molecule id="P08195-1"/>
</dbReference>
<dbReference type="PIR" id="A28455">
    <property type="entry name" value="SAHU4F"/>
</dbReference>
<dbReference type="RefSeq" id="NP_001012680.1">
    <molecule id="P08195-5"/>
    <property type="nucleotide sequence ID" value="NM_001012662.3"/>
</dbReference>
<dbReference type="RefSeq" id="NP_001012682.1">
    <molecule id="P08195-3"/>
    <property type="nucleotide sequence ID" value="NM_001012664.3"/>
</dbReference>
<dbReference type="RefSeq" id="NP_001013269.1">
    <molecule id="P08195-2"/>
    <property type="nucleotide sequence ID" value="NM_001013251.3"/>
</dbReference>
<dbReference type="RefSeq" id="NP_002385.3">
    <molecule id="P08195-1"/>
    <property type="nucleotide sequence ID" value="NM_002394.5"/>
</dbReference>
<dbReference type="PDB" id="2DH2">
    <property type="method" value="X-ray"/>
    <property type="resolution" value="2.10 A"/>
    <property type="chains" value="A=212-630"/>
</dbReference>
<dbReference type="PDB" id="2DH3">
    <property type="method" value="X-ray"/>
    <property type="resolution" value="2.80 A"/>
    <property type="chains" value="A/B=212-630"/>
</dbReference>
<dbReference type="PDB" id="6IRS">
    <property type="method" value="EM"/>
    <property type="resolution" value="3.30 A"/>
    <property type="chains" value="A=1-630"/>
</dbReference>
<dbReference type="PDB" id="6IRT">
    <property type="method" value="EM"/>
    <property type="resolution" value="3.50 A"/>
    <property type="chains" value="A=1-630"/>
</dbReference>
<dbReference type="PDB" id="6JMQ">
    <property type="method" value="EM"/>
    <property type="resolution" value="3.31 A"/>
    <property type="chains" value="B=2-630"/>
</dbReference>
<dbReference type="PDB" id="6JMR">
    <property type="method" value="EM"/>
    <property type="resolution" value="4.10 A"/>
    <property type="chains" value="B=2-630"/>
</dbReference>
<dbReference type="PDB" id="6S8V">
    <property type="method" value="X-ray"/>
    <property type="resolution" value="1.80 A"/>
    <property type="chains" value="B/D=212-630"/>
</dbReference>
<dbReference type="PDB" id="7B00">
    <property type="method" value="EM"/>
    <property type="resolution" value="3.98 A"/>
    <property type="chains" value="B=102-630"/>
</dbReference>
<dbReference type="PDB" id="7CCS">
    <property type="method" value="EM"/>
    <property type="resolution" value="6.20 A"/>
    <property type="chains" value="A=2-630"/>
</dbReference>
<dbReference type="PDB" id="7CMH">
    <property type="method" value="EM"/>
    <property type="resolution" value="3.40 A"/>
    <property type="chains" value="A=2-630"/>
</dbReference>
<dbReference type="PDB" id="7CMI">
    <property type="method" value="EM"/>
    <property type="resolution" value="2.90 A"/>
    <property type="chains" value="A=2-630"/>
</dbReference>
<dbReference type="PDB" id="7DF1">
    <property type="method" value="X-ray"/>
    <property type="resolution" value="2.81 A"/>
    <property type="chains" value="A/B/C/D=212-630"/>
</dbReference>
<dbReference type="PDB" id="7DSK">
    <property type="method" value="EM"/>
    <property type="resolution" value="2.90 A"/>
    <property type="chains" value="A=2-630"/>
</dbReference>
<dbReference type="PDB" id="7DSL">
    <property type="method" value="EM"/>
    <property type="resolution" value="2.90 A"/>
    <property type="chains" value="A=2-630"/>
</dbReference>
<dbReference type="PDB" id="7DSN">
    <property type="method" value="EM"/>
    <property type="resolution" value="3.10 A"/>
    <property type="chains" value="A=2-630"/>
</dbReference>
<dbReference type="PDB" id="7DSQ">
    <property type="method" value="EM"/>
    <property type="resolution" value="3.40 A"/>
    <property type="chains" value="A=2-630"/>
</dbReference>
<dbReference type="PDB" id="7EPZ">
    <property type="method" value="EM"/>
    <property type="resolution" value="3.40 A"/>
    <property type="chains" value="A=2-630"/>
</dbReference>
<dbReference type="PDB" id="7P9U">
    <property type="method" value="EM"/>
    <property type="resolution" value="3.70 A"/>
    <property type="chains" value="A=2-630"/>
</dbReference>
<dbReference type="PDB" id="7P9V">
    <property type="method" value="EM"/>
    <property type="resolution" value="3.40 A"/>
    <property type="chains" value="A=2-630"/>
</dbReference>
<dbReference type="PDB" id="8A6L">
    <property type="method" value="EM"/>
    <property type="resolution" value="3.18 A"/>
    <property type="chains" value="A=98-630"/>
</dbReference>
<dbReference type="PDB" id="8G0M">
    <property type="method" value="X-ray"/>
    <property type="resolution" value="2.25 A"/>
    <property type="chains" value="A=212-630"/>
</dbReference>
<dbReference type="PDB" id="8IDA">
    <property type="method" value="EM"/>
    <property type="resolution" value="3.20 A"/>
    <property type="chains" value="A=2-630"/>
</dbReference>
<dbReference type="PDB" id="8J8L">
    <property type="method" value="EM"/>
    <property type="resolution" value="3.56 A"/>
    <property type="chains" value="A=2-630"/>
</dbReference>
<dbReference type="PDB" id="8J8M">
    <property type="method" value="EM"/>
    <property type="resolution" value="3.58 A"/>
    <property type="chains" value="A=2-630"/>
</dbReference>
<dbReference type="PDB" id="8KDD">
    <property type="method" value="EM"/>
    <property type="resolution" value="3.83 A"/>
    <property type="chains" value="A=2-630"/>
</dbReference>
<dbReference type="PDB" id="8KDF">
    <property type="method" value="EM"/>
    <property type="resolution" value="3.89 A"/>
    <property type="chains" value="A=2-630"/>
</dbReference>
<dbReference type="PDB" id="8KDG">
    <property type="method" value="EM"/>
    <property type="resolution" value="3.68 A"/>
    <property type="chains" value="A=2-630"/>
</dbReference>
<dbReference type="PDB" id="8KDH">
    <property type="method" value="EM"/>
    <property type="resolution" value="3.78 A"/>
    <property type="chains" value="A=2-630"/>
</dbReference>
<dbReference type="PDB" id="8KDI">
    <property type="method" value="EM"/>
    <property type="resolution" value="3.58 A"/>
    <property type="chains" value="A=2-630"/>
</dbReference>
<dbReference type="PDB" id="8KDJ">
    <property type="method" value="EM"/>
    <property type="resolution" value="3.73 A"/>
    <property type="chains" value="A=2-630"/>
</dbReference>
<dbReference type="PDB" id="8KDN">
    <property type="method" value="EM"/>
    <property type="resolution" value="4.12 A"/>
    <property type="chains" value="A=2-630"/>
</dbReference>
<dbReference type="PDB" id="8KDO">
    <property type="method" value="EM"/>
    <property type="resolution" value="4.12 A"/>
    <property type="chains" value="A=2-630"/>
</dbReference>
<dbReference type="PDB" id="8KDP">
    <property type="method" value="EM"/>
    <property type="resolution" value="4.12 A"/>
    <property type="chains" value="A=2-630"/>
</dbReference>
<dbReference type="PDB" id="8QEY">
    <property type="method" value="EM"/>
    <property type="resolution" value="4.00 A"/>
    <property type="chains" value="B=1-630"/>
</dbReference>
<dbReference type="PDB" id="8WNS">
    <property type="method" value="EM"/>
    <property type="resolution" value="3.42 A"/>
    <property type="chains" value="A=1-630"/>
</dbReference>
<dbReference type="PDB" id="8WNT">
    <property type="method" value="EM"/>
    <property type="resolution" value="3.42 A"/>
    <property type="chains" value="A=1-630"/>
</dbReference>
<dbReference type="PDB" id="8WNY">
    <property type="method" value="EM"/>
    <property type="resolution" value="3.50 A"/>
    <property type="chains" value="A=1-630"/>
</dbReference>
<dbReference type="PDB" id="8X0W">
    <property type="method" value="EM"/>
    <property type="resolution" value="3.10 A"/>
    <property type="chains" value="A=161-630"/>
</dbReference>
<dbReference type="PDB" id="8XPU">
    <property type="method" value="EM"/>
    <property type="resolution" value="3.30 A"/>
    <property type="chains" value="A=2-630"/>
</dbReference>
<dbReference type="PDB" id="8YLP">
    <property type="method" value="EM"/>
    <property type="resolution" value="2.90 A"/>
    <property type="chains" value="A=2-630"/>
</dbReference>
<dbReference type="PDBsum" id="2DH2"/>
<dbReference type="PDBsum" id="2DH3"/>
<dbReference type="PDBsum" id="6IRS"/>
<dbReference type="PDBsum" id="6IRT"/>
<dbReference type="PDBsum" id="6JMQ"/>
<dbReference type="PDBsum" id="6JMR"/>
<dbReference type="PDBsum" id="6S8V"/>
<dbReference type="PDBsum" id="7B00"/>
<dbReference type="PDBsum" id="7CCS"/>
<dbReference type="PDBsum" id="7CMH"/>
<dbReference type="PDBsum" id="7CMI"/>
<dbReference type="PDBsum" id="7DF1"/>
<dbReference type="PDBsum" id="7DSK"/>
<dbReference type="PDBsum" id="7DSL"/>
<dbReference type="PDBsum" id="7DSN"/>
<dbReference type="PDBsum" id="7DSQ"/>
<dbReference type="PDBsum" id="7EPZ"/>
<dbReference type="PDBsum" id="7P9U"/>
<dbReference type="PDBsum" id="7P9V"/>
<dbReference type="PDBsum" id="8A6L"/>
<dbReference type="PDBsum" id="8G0M"/>
<dbReference type="PDBsum" id="8IDA"/>
<dbReference type="PDBsum" id="8J8L"/>
<dbReference type="PDBsum" id="8J8M"/>
<dbReference type="PDBsum" id="8KDD"/>
<dbReference type="PDBsum" id="8KDF"/>
<dbReference type="PDBsum" id="8KDG"/>
<dbReference type="PDBsum" id="8KDH"/>
<dbReference type="PDBsum" id="8KDI"/>
<dbReference type="PDBsum" id="8KDJ"/>
<dbReference type="PDBsum" id="8KDN"/>
<dbReference type="PDBsum" id="8KDO"/>
<dbReference type="PDBsum" id="8KDP"/>
<dbReference type="PDBsum" id="8QEY"/>
<dbReference type="PDBsum" id="8WNS"/>
<dbReference type="PDBsum" id="8WNT"/>
<dbReference type="PDBsum" id="8WNY"/>
<dbReference type="PDBsum" id="8X0W"/>
<dbReference type="PDBsum" id="8XPU"/>
<dbReference type="PDBsum" id="8YLP"/>
<dbReference type="EMDB" id="EMD-11726"/>
<dbReference type="EMDB" id="EMD-11952"/>
<dbReference type="EMDB" id="EMD-13266"/>
<dbReference type="EMDB" id="EMD-13267"/>
<dbReference type="EMDB" id="EMD-15210"/>
<dbReference type="EMDB" id="EMD-18379"/>
<dbReference type="EMDB" id="EMD-30341"/>
<dbReference type="EMDB" id="EMD-30406"/>
<dbReference type="EMDB" id="EMD-30407"/>
<dbReference type="EMDB" id="EMD-30835"/>
<dbReference type="EMDB" id="EMD-30837"/>
<dbReference type="EMDB" id="EMD-30839"/>
<dbReference type="EMDB" id="EMD-30841"/>
<dbReference type="EMDB" id="EMD-31251"/>
<dbReference type="EMDB" id="EMD-35361"/>
<dbReference type="EMDB" id="EMD-36073"/>
<dbReference type="EMDB" id="EMD-36074"/>
<dbReference type="EMDB" id="EMD-37132"/>
<dbReference type="EMDB" id="EMD-37134"/>
<dbReference type="EMDB" id="EMD-37135"/>
<dbReference type="EMDB" id="EMD-37136"/>
<dbReference type="EMDB" id="EMD-37137"/>
<dbReference type="EMDB" id="EMD-37138"/>
<dbReference type="EMDB" id="EMD-37140"/>
<dbReference type="EMDB" id="EMD-37141"/>
<dbReference type="EMDB" id="EMD-37142"/>
<dbReference type="EMDB" id="EMD-37671"/>
<dbReference type="EMDB" id="EMD-37672"/>
<dbReference type="EMDB" id="EMD-37675"/>
<dbReference type="EMDB" id="EMD-37983"/>
<dbReference type="EMDB" id="EMD-38561"/>
<dbReference type="EMDB" id="EMD-39388"/>
<dbReference type="EMDB" id="EMD-4642"/>
<dbReference type="EMDB" id="EMD-9721"/>
<dbReference type="EMDB" id="EMD-9722"/>
<dbReference type="EMDB" id="EMD-9849"/>
<dbReference type="EMDB" id="EMD-9850"/>
<dbReference type="SMR" id="P08195"/>
<dbReference type="BioGRID" id="112411">
    <property type="interactions" value="464"/>
</dbReference>
<dbReference type="ComplexPortal" id="CPX-8185">
    <property type="entry name" value="LAT1-4F2 heteromeric amino acid transporter complex"/>
</dbReference>
<dbReference type="ComplexPortal" id="CPX-8186">
    <property type="entry name" value="LAT2-4F2 heteromeric amino acid transporter complex"/>
</dbReference>
<dbReference type="ComplexPortal" id="CPX-8187">
    <property type="entry name" value="Y+LAT1-4F2 heteromeric amino acid transporter complex"/>
</dbReference>
<dbReference type="ComplexPortal" id="CPX-8188">
    <property type="entry name" value="Y+LAT2-4F2 heteromeric amino acid transporter complex"/>
</dbReference>
<dbReference type="ComplexPortal" id="CPX-8189">
    <property type="entry name" value="ASC1-4F2 heteromeric amino acid transporter complex"/>
</dbReference>
<dbReference type="ComplexPortal" id="CPX-8190">
    <property type="entry name" value="XCT-4F2 heteromeric amino acid transporter complex"/>
</dbReference>
<dbReference type="CORUM" id="P08195"/>
<dbReference type="FunCoup" id="P08195">
    <property type="interactions" value="1616"/>
</dbReference>
<dbReference type="IntAct" id="P08195">
    <property type="interactions" value="153"/>
</dbReference>
<dbReference type="MINT" id="P08195"/>
<dbReference type="STRING" id="9606.ENSP00000367123"/>
<dbReference type="GuidetoPHARMACOLOGY" id="890"/>
<dbReference type="CAZy" id="GH13">
    <property type="family name" value="Glycoside Hydrolase Family 13"/>
</dbReference>
<dbReference type="TCDB" id="2.A.3.8.18">
    <property type="family name" value="the amino acid-polyamine-organocation (apc) family"/>
</dbReference>
<dbReference type="TCDB" id="8.A.9.2.2">
    <property type="family name" value="the rbat transport accessory protein (rbat) family"/>
</dbReference>
<dbReference type="GlyConnect" id="984">
    <property type="glycosylation" value="54 N-Linked glycans (3 sites)"/>
</dbReference>
<dbReference type="GlyCosmos" id="P08195">
    <property type="glycosylation" value="4 sites, 51 glycans"/>
</dbReference>
<dbReference type="GlyGen" id="P08195">
    <property type="glycosylation" value="6 sites, 147 N-linked glycans (3 sites), 1 O-linked glycan (1 site)"/>
</dbReference>
<dbReference type="iPTMnet" id="P08195"/>
<dbReference type="MetOSite" id="P08195"/>
<dbReference type="PhosphoSitePlus" id="P08195"/>
<dbReference type="SwissPalm" id="P08195"/>
<dbReference type="BioMuta" id="SLC3A2"/>
<dbReference type="DMDM" id="257051063"/>
<dbReference type="jPOST" id="P08195"/>
<dbReference type="MassIVE" id="P08195"/>
<dbReference type="PaxDb" id="9606-ENSP00000367123"/>
<dbReference type="PeptideAtlas" id="P08195"/>
<dbReference type="PRIDE" id="J3KPF3"/>
<dbReference type="ProteomicsDB" id="52082">
    <molecule id="P08195-1"/>
</dbReference>
<dbReference type="ProteomicsDB" id="52083">
    <molecule id="P08195-2"/>
</dbReference>
<dbReference type="ProteomicsDB" id="52084">
    <molecule id="P08195-3"/>
</dbReference>
<dbReference type="ProteomicsDB" id="52085">
    <molecule id="P08195-4"/>
</dbReference>
<dbReference type="Pumba" id="P08195"/>
<dbReference type="ABCD" id="P08195">
    <property type="antibodies" value="80 sequenced antibodies"/>
</dbReference>
<dbReference type="Antibodypedia" id="15042">
    <property type="antibodies" value="1160 antibodies from 47 providers"/>
</dbReference>
<dbReference type="DNASU" id="6520"/>
<dbReference type="Ensembl" id="ENST00000338663.12">
    <molecule id="P08195-2"/>
    <property type="protein sequence ID" value="ENSP00000340815.7"/>
    <property type="gene ID" value="ENSG00000168003.19"/>
</dbReference>
<dbReference type="Ensembl" id="ENST00000377889.6">
    <molecule id="P08195-3"/>
    <property type="protein sequence ID" value="ENSP00000367121.2"/>
    <property type="gene ID" value="ENSG00000168003.19"/>
</dbReference>
<dbReference type="Ensembl" id="ENST00000377890.6">
    <molecule id="P08195-1"/>
    <property type="protein sequence ID" value="ENSP00000367122.2"/>
    <property type="gene ID" value="ENSG00000168003.19"/>
</dbReference>
<dbReference type="Ensembl" id="ENST00000377891.6">
    <molecule id="P08195-5"/>
    <property type="protein sequence ID" value="ENSP00000367123.2"/>
    <property type="gene ID" value="ENSG00000168003.19"/>
</dbReference>
<dbReference type="Ensembl" id="ENST00000538084.2">
    <molecule id="P08195-4"/>
    <property type="protein sequence ID" value="ENSP00000440001.2"/>
    <property type="gene ID" value="ENSG00000168003.19"/>
</dbReference>
<dbReference type="Ensembl" id="ENST00000544377.2">
    <molecule id="P08195-2"/>
    <property type="protein sequence ID" value="ENSP00000442135.2"/>
    <property type="gene ID" value="ENSG00000168003.19"/>
</dbReference>
<dbReference type="Ensembl" id="ENST00000680631.1">
    <molecule id="P08195-2"/>
    <property type="protein sequence ID" value="ENSP00000506006.1"/>
    <property type="gene ID" value="ENSG00000168003.19"/>
</dbReference>
<dbReference type="Ensembl" id="ENST00000681657.1">
    <molecule id="P08195-2"/>
    <property type="protein sequence ID" value="ENSP00000505110.1"/>
    <property type="gene ID" value="ENSG00000168003.19"/>
</dbReference>
<dbReference type="GeneID" id="6520"/>
<dbReference type="KEGG" id="hsa:6520"/>
<dbReference type="MANE-Select" id="ENST00000338663.12">
    <molecule id="P08195-2"/>
    <property type="protein sequence ID" value="ENSP00000340815.7"/>
    <property type="RefSeq nucleotide sequence ID" value="NM_001013251.3"/>
    <property type="RefSeq protein sequence ID" value="NP_001013269.1"/>
</dbReference>
<dbReference type="UCSC" id="uc001nwd.4">
    <molecule id="P08195-1"/>
    <property type="organism name" value="human"/>
</dbReference>
<dbReference type="AGR" id="HGNC:11026"/>
<dbReference type="CTD" id="6520"/>
<dbReference type="DisGeNET" id="6520"/>
<dbReference type="GeneCards" id="SLC3A2"/>
<dbReference type="HGNC" id="HGNC:11026">
    <property type="gene designation" value="SLC3A2"/>
</dbReference>
<dbReference type="HPA" id="ENSG00000168003">
    <property type="expression patterns" value="Low tissue specificity"/>
</dbReference>
<dbReference type="MIM" id="158070">
    <property type="type" value="gene"/>
</dbReference>
<dbReference type="neXtProt" id="NX_P08195"/>
<dbReference type="OpenTargets" id="ENSG00000168003"/>
<dbReference type="PharmGKB" id="PA35894"/>
<dbReference type="VEuPathDB" id="HostDB:ENSG00000168003"/>
<dbReference type="eggNOG" id="KOG0471">
    <property type="taxonomic scope" value="Eukaryota"/>
</dbReference>
<dbReference type="GeneTree" id="ENSGT00940000156646"/>
<dbReference type="HOGENOM" id="CLU_006462_9_0_1"/>
<dbReference type="InParanoid" id="P08195"/>
<dbReference type="OrthoDB" id="1740265at2759"/>
<dbReference type="PAN-GO" id="P08195">
    <property type="GO annotations" value="8 GO annotations based on evolutionary models"/>
</dbReference>
<dbReference type="PhylomeDB" id="P08195"/>
<dbReference type="TreeFam" id="TF314498"/>
<dbReference type="BioCyc" id="MetaCyc:ENSG00000168003-MONOMER"/>
<dbReference type="PathwayCommons" id="P08195"/>
<dbReference type="Reactome" id="R-HSA-210991">
    <property type="pathway name" value="Basigin interactions"/>
</dbReference>
<dbReference type="Reactome" id="R-HSA-352230">
    <property type="pathway name" value="Amino acid transport across the plasma membrane"/>
</dbReference>
<dbReference type="Reactome" id="R-HSA-5660862">
    <property type="pathway name" value="Defective SLC7A7 causes lysinuric protein intolerance (LPI)"/>
</dbReference>
<dbReference type="Reactome" id="R-HSA-71240">
    <property type="pathway name" value="Tryptophan catabolism"/>
</dbReference>
<dbReference type="SABIO-RK" id="P08195"/>
<dbReference type="SignaLink" id="P08195"/>
<dbReference type="SIGNOR" id="P08195"/>
<dbReference type="BioGRID-ORCS" id="6520">
    <property type="hits" value="194 hits in 1175 CRISPR screens"/>
</dbReference>
<dbReference type="CD-CODE" id="FB4E32DD">
    <property type="entry name" value="Presynaptic clusters and postsynaptic densities"/>
</dbReference>
<dbReference type="ChiTaRS" id="SLC3A2">
    <property type="organism name" value="human"/>
</dbReference>
<dbReference type="EvolutionaryTrace" id="P08195"/>
<dbReference type="GeneWiki" id="SLC3A2"/>
<dbReference type="GenomeRNAi" id="6520"/>
<dbReference type="Pharos" id="P08195">
    <property type="development level" value="Tbio"/>
</dbReference>
<dbReference type="PRO" id="PR:P08195"/>
<dbReference type="Proteomes" id="UP000005640">
    <property type="component" value="Chromosome 11"/>
</dbReference>
<dbReference type="RNAct" id="P08195">
    <property type="molecule type" value="protein"/>
</dbReference>
<dbReference type="Bgee" id="ENSG00000168003">
    <property type="expression patterns" value="Expressed in islet of Langerhans and 206 other cell types or tissues"/>
</dbReference>
<dbReference type="ExpressionAtlas" id="P08195">
    <property type="expression patterns" value="baseline and differential"/>
</dbReference>
<dbReference type="GO" id="GO:1990184">
    <property type="term" value="C:amino acid transport complex"/>
    <property type="evidence" value="ECO:0000314"/>
    <property type="project" value="UniProtKB"/>
</dbReference>
<dbReference type="GO" id="GO:0070161">
    <property type="term" value="C:anchoring junction"/>
    <property type="evidence" value="ECO:0007669"/>
    <property type="project" value="UniProtKB-SubCell"/>
</dbReference>
<dbReference type="GO" id="GO:0016324">
    <property type="term" value="C:apical plasma membrane"/>
    <property type="evidence" value="ECO:0000314"/>
    <property type="project" value="ARUK-UCL"/>
</dbReference>
<dbReference type="GO" id="GO:0044225">
    <property type="term" value="C:apical pole of neuron"/>
    <property type="evidence" value="ECO:0007669"/>
    <property type="project" value="Ensembl"/>
</dbReference>
<dbReference type="GO" id="GO:0009925">
    <property type="term" value="C:basal plasma membrane"/>
    <property type="evidence" value="ECO:0000250"/>
    <property type="project" value="ARUK-UCL"/>
</dbReference>
<dbReference type="GO" id="GO:0016323">
    <property type="term" value="C:basolateral plasma membrane"/>
    <property type="evidence" value="ECO:0000314"/>
    <property type="project" value="ARUK-UCL"/>
</dbReference>
<dbReference type="GO" id="GO:0009986">
    <property type="term" value="C:cell surface"/>
    <property type="evidence" value="ECO:0000314"/>
    <property type="project" value="UniProtKB"/>
</dbReference>
<dbReference type="GO" id="GO:0070062">
    <property type="term" value="C:extracellular exosome"/>
    <property type="evidence" value="ECO:0007005"/>
    <property type="project" value="UniProtKB"/>
</dbReference>
<dbReference type="GO" id="GO:0005765">
    <property type="term" value="C:lysosomal membrane"/>
    <property type="evidence" value="ECO:0007669"/>
    <property type="project" value="UniProtKB-SubCell"/>
</dbReference>
<dbReference type="GO" id="GO:0042470">
    <property type="term" value="C:melanosome"/>
    <property type="evidence" value="ECO:0007669"/>
    <property type="project" value="UniProtKB-SubCell"/>
</dbReference>
<dbReference type="GO" id="GO:0016020">
    <property type="term" value="C:membrane"/>
    <property type="evidence" value="ECO:0007005"/>
    <property type="project" value="UniProtKB"/>
</dbReference>
<dbReference type="GO" id="GO:0005654">
    <property type="term" value="C:nucleoplasm"/>
    <property type="evidence" value="ECO:0000314"/>
    <property type="project" value="HPA"/>
</dbReference>
<dbReference type="GO" id="GO:0005886">
    <property type="term" value="C:plasma membrane"/>
    <property type="evidence" value="ECO:0000314"/>
    <property type="project" value="HPA"/>
</dbReference>
<dbReference type="GO" id="GO:0045202">
    <property type="term" value="C:synapse"/>
    <property type="evidence" value="ECO:0007669"/>
    <property type="project" value="Ensembl"/>
</dbReference>
<dbReference type="GO" id="GO:0015173">
    <property type="term" value="F:aromatic amino acid transmembrane transporter activity"/>
    <property type="evidence" value="ECO:0000316"/>
    <property type="project" value="ARUK-UCL"/>
</dbReference>
<dbReference type="GO" id="GO:0045296">
    <property type="term" value="F:cadherin binding"/>
    <property type="evidence" value="ECO:0007005"/>
    <property type="project" value="BHF-UCL"/>
</dbReference>
<dbReference type="GO" id="GO:0003725">
    <property type="term" value="F:double-stranded RNA binding"/>
    <property type="evidence" value="ECO:0000314"/>
    <property type="project" value="MGI"/>
</dbReference>
<dbReference type="GO" id="GO:0140272">
    <property type="term" value="F:exogenous protein binding"/>
    <property type="evidence" value="ECO:0000314"/>
    <property type="project" value="UniProtKB"/>
</dbReference>
<dbReference type="GO" id="GO:0015180">
    <property type="term" value="F:L-alanine transmembrane transporter activity"/>
    <property type="evidence" value="ECO:0000316"/>
    <property type="project" value="ARUK-UCL"/>
</dbReference>
<dbReference type="GO" id="GO:0015190">
    <property type="term" value="F:L-leucine transmembrane transporter activity"/>
    <property type="evidence" value="ECO:0000316"/>
    <property type="project" value="ARUK-UCL"/>
</dbReference>
<dbReference type="GO" id="GO:0015175">
    <property type="term" value="F:neutral L-amino acid transmembrane transporter activity"/>
    <property type="evidence" value="ECO:0000316"/>
    <property type="project" value="ARUK-UCL"/>
</dbReference>
<dbReference type="GO" id="GO:0046982">
    <property type="term" value="F:protein heterodimerization activity"/>
    <property type="evidence" value="ECO:0000314"/>
    <property type="project" value="UniProtKB"/>
</dbReference>
<dbReference type="GO" id="GO:0042803">
    <property type="term" value="F:protein homodimerization activity"/>
    <property type="evidence" value="ECO:0007669"/>
    <property type="project" value="Ensembl"/>
</dbReference>
<dbReference type="GO" id="GO:0003723">
    <property type="term" value="F:RNA binding"/>
    <property type="evidence" value="ECO:0007005"/>
    <property type="project" value="UniProtKB"/>
</dbReference>
<dbReference type="GO" id="GO:0001618">
    <property type="term" value="F:virus receptor activity"/>
    <property type="evidence" value="ECO:0007669"/>
    <property type="project" value="UniProtKB-KW"/>
</dbReference>
<dbReference type="GO" id="GO:0006865">
    <property type="term" value="P:amino acid transport"/>
    <property type="evidence" value="ECO:0000304"/>
    <property type="project" value="UniProtKB"/>
</dbReference>
<dbReference type="GO" id="GO:0006816">
    <property type="term" value="P:calcium ion transport"/>
    <property type="evidence" value="ECO:0000303"/>
    <property type="project" value="UniProtKB"/>
</dbReference>
<dbReference type="GO" id="GO:0005975">
    <property type="term" value="P:carbohydrate metabolic process"/>
    <property type="evidence" value="ECO:0007669"/>
    <property type="project" value="InterPro"/>
</dbReference>
<dbReference type="GO" id="GO:0015818">
    <property type="term" value="P:isoleucine transport"/>
    <property type="evidence" value="ECO:0000314"/>
    <property type="project" value="UniProtKB"/>
</dbReference>
<dbReference type="GO" id="GO:1904273">
    <property type="term" value="P:L-alanine import across plasma membrane"/>
    <property type="evidence" value="ECO:0000316"/>
    <property type="project" value="ARUK-UCL"/>
</dbReference>
<dbReference type="GO" id="GO:1902024">
    <property type="term" value="P:L-histidine transport"/>
    <property type="evidence" value="ECO:0000314"/>
    <property type="project" value="UniProtKB"/>
</dbReference>
<dbReference type="GO" id="GO:1903801">
    <property type="term" value="P:L-leucine import across plasma membrane"/>
    <property type="evidence" value="ECO:0000316"/>
    <property type="project" value="ARUK-UCL"/>
</dbReference>
<dbReference type="GO" id="GO:0015820">
    <property type="term" value="P:L-leucine transport"/>
    <property type="evidence" value="ECO:0000314"/>
    <property type="project" value="UniProtKB"/>
</dbReference>
<dbReference type="GO" id="GO:0015821">
    <property type="term" value="P:methionine transport"/>
    <property type="evidence" value="ECO:0000314"/>
    <property type="project" value="UniProtKB"/>
</dbReference>
<dbReference type="GO" id="GO:0015823">
    <property type="term" value="P:phenylalanine transport"/>
    <property type="evidence" value="ECO:0000314"/>
    <property type="project" value="UniProtKB"/>
</dbReference>
<dbReference type="GO" id="GO:0015824">
    <property type="term" value="P:proline transport"/>
    <property type="evidence" value="ECO:0000314"/>
    <property type="project" value="UniProtKB"/>
</dbReference>
<dbReference type="GO" id="GO:0043330">
    <property type="term" value="P:response to exogenous dsRNA"/>
    <property type="evidence" value="ECO:0000315"/>
    <property type="project" value="MGI"/>
</dbReference>
<dbReference type="GO" id="GO:0046718">
    <property type="term" value="P:symbiont entry into host cell"/>
    <property type="evidence" value="ECO:0000315"/>
    <property type="project" value="UniProtKB"/>
</dbReference>
<dbReference type="GO" id="GO:0070327">
    <property type="term" value="P:thyroid hormone transport"/>
    <property type="evidence" value="ECO:0000314"/>
    <property type="project" value="UniProtKB"/>
</dbReference>
<dbReference type="GO" id="GO:0015827">
    <property type="term" value="P:tryptophan transport"/>
    <property type="evidence" value="ECO:0000314"/>
    <property type="project" value="UniProtKB"/>
</dbReference>
<dbReference type="GO" id="GO:0015828">
    <property type="term" value="P:tyrosine transport"/>
    <property type="evidence" value="ECO:0000314"/>
    <property type="project" value="UniProtKB"/>
</dbReference>
<dbReference type="GO" id="GO:0015829">
    <property type="term" value="P:valine transport"/>
    <property type="evidence" value="ECO:0000314"/>
    <property type="project" value="UniProtKB"/>
</dbReference>
<dbReference type="CDD" id="cd11345">
    <property type="entry name" value="AmyAc_SLC3A2"/>
    <property type="match status" value="1"/>
</dbReference>
<dbReference type="FunFam" id="2.60.40.1180:FF:000012">
    <property type="entry name" value="4F2 cell-surface antigen heavy chain"/>
    <property type="match status" value="1"/>
</dbReference>
<dbReference type="FunFam" id="3.20.20.80:FF:000061">
    <property type="entry name" value="4F2 cell-surface antigen heavy chain"/>
    <property type="match status" value="1"/>
</dbReference>
<dbReference type="Gene3D" id="3.20.20.80">
    <property type="entry name" value="Glycosidases"/>
    <property type="match status" value="1"/>
</dbReference>
<dbReference type="Gene3D" id="2.60.40.1180">
    <property type="entry name" value="Golgi alpha-mannosidase II"/>
    <property type="match status" value="1"/>
</dbReference>
<dbReference type="InterPro" id="IPR006047">
    <property type="entry name" value="Glyco_hydro_13_cat_dom"/>
</dbReference>
<dbReference type="InterPro" id="IPR013780">
    <property type="entry name" value="Glyco_hydro_b"/>
</dbReference>
<dbReference type="InterPro" id="IPR017853">
    <property type="entry name" value="Glycoside_hydrolase_SF"/>
</dbReference>
<dbReference type="InterPro" id="IPR042280">
    <property type="entry name" value="SLC3A2"/>
</dbReference>
<dbReference type="InterPro" id="IPR031984">
    <property type="entry name" value="SLC3A2_N"/>
</dbReference>
<dbReference type="PANTHER" id="PTHR46673">
    <property type="entry name" value="4F2 CELL-SURFACE ANTIGEN HEAVY CHAIN"/>
    <property type="match status" value="1"/>
</dbReference>
<dbReference type="PANTHER" id="PTHR46673:SF1">
    <property type="entry name" value="4F2 CELL-SURFACE ANTIGEN HEAVY CHAIN"/>
    <property type="match status" value="1"/>
</dbReference>
<dbReference type="Pfam" id="PF00128">
    <property type="entry name" value="Alpha-amylase"/>
    <property type="match status" value="1"/>
</dbReference>
<dbReference type="Pfam" id="PF16028">
    <property type="entry name" value="SLC3A2_N"/>
    <property type="match status" value="1"/>
</dbReference>
<dbReference type="PRINTS" id="PR02045">
    <property type="entry name" value="F138DOMAIN"/>
</dbReference>
<dbReference type="SMART" id="SM00642">
    <property type="entry name" value="Aamy"/>
    <property type="match status" value="1"/>
</dbReference>
<dbReference type="SUPFAM" id="SSF51445">
    <property type="entry name" value="(Trans)glycosidases"/>
    <property type="match status" value="1"/>
</dbReference>
<dbReference type="SUPFAM" id="SSF51011">
    <property type="entry name" value="Glycosyl hydrolase domain"/>
    <property type="match status" value="1"/>
</dbReference>
<keyword id="KW-0002">3D-structure</keyword>
<keyword id="KW-0007">Acetylation</keyword>
<keyword id="KW-0025">Alternative splicing</keyword>
<keyword id="KW-0029">Amino-acid transport</keyword>
<keyword id="KW-0965">Cell junction</keyword>
<keyword id="KW-1003">Cell membrane</keyword>
<keyword id="KW-0903">Direct protein sequencing</keyword>
<keyword id="KW-1015">Disulfide bond</keyword>
<keyword id="KW-0325">Glycoprotein</keyword>
<keyword id="KW-1183">Host cell receptor for virus entry</keyword>
<keyword id="KW-1017">Isopeptide bond</keyword>
<keyword id="KW-0458">Lysosome</keyword>
<keyword id="KW-0472">Membrane</keyword>
<keyword id="KW-0597">Phosphoprotein</keyword>
<keyword id="KW-1267">Proteomics identification</keyword>
<keyword id="KW-0675">Receptor</keyword>
<keyword id="KW-1185">Reference proteome</keyword>
<keyword id="KW-0735">Signal-anchor</keyword>
<keyword id="KW-0812">Transmembrane</keyword>
<keyword id="KW-1133">Transmembrane helix</keyword>
<keyword id="KW-0813">Transport</keyword>
<keyword id="KW-0832">Ubl conjugation</keyword>
<organism>
    <name type="scientific">Homo sapiens</name>
    <name type="common">Human</name>
    <dbReference type="NCBI Taxonomy" id="9606"/>
    <lineage>
        <taxon>Eukaryota</taxon>
        <taxon>Metazoa</taxon>
        <taxon>Chordata</taxon>
        <taxon>Craniata</taxon>
        <taxon>Vertebrata</taxon>
        <taxon>Euteleostomi</taxon>
        <taxon>Mammalia</taxon>
        <taxon>Eutheria</taxon>
        <taxon>Euarchontoglires</taxon>
        <taxon>Primates</taxon>
        <taxon>Haplorrhini</taxon>
        <taxon>Catarrhini</taxon>
        <taxon>Hominidae</taxon>
        <taxon>Homo</taxon>
    </lineage>
</organism>
<evidence type="ECO:0000250" key="1">
    <source>
        <dbReference type="UniProtKB" id="P10852"/>
    </source>
</evidence>
<evidence type="ECO:0000250" key="2">
    <source>
        <dbReference type="UniProtKB" id="P63115"/>
    </source>
</evidence>
<evidence type="ECO:0000250" key="3">
    <source>
        <dbReference type="UniProtKB" id="Q794F9"/>
    </source>
</evidence>
<evidence type="ECO:0000256" key="4">
    <source>
        <dbReference type="SAM" id="MobiDB-lite"/>
    </source>
</evidence>
<evidence type="ECO:0000269" key="5">
    <source>
    </source>
</evidence>
<evidence type="ECO:0000269" key="6">
    <source>
    </source>
</evidence>
<evidence type="ECO:0000269" key="7">
    <source>
    </source>
</evidence>
<evidence type="ECO:0000269" key="8">
    <source>
    </source>
</evidence>
<evidence type="ECO:0000269" key="9">
    <source>
    </source>
</evidence>
<evidence type="ECO:0000269" key="10">
    <source>
    </source>
</evidence>
<evidence type="ECO:0000269" key="11">
    <source>
    </source>
</evidence>
<evidence type="ECO:0000269" key="12">
    <source>
    </source>
</evidence>
<evidence type="ECO:0000269" key="13">
    <source>
    </source>
</evidence>
<evidence type="ECO:0000269" key="14">
    <source>
    </source>
</evidence>
<evidence type="ECO:0000269" key="15">
    <source>
    </source>
</evidence>
<evidence type="ECO:0000269" key="16">
    <source>
    </source>
</evidence>
<evidence type="ECO:0000269" key="17">
    <source>
    </source>
</evidence>
<evidence type="ECO:0000269" key="18">
    <source>
    </source>
</evidence>
<evidence type="ECO:0000269" key="19">
    <source>
    </source>
</evidence>
<evidence type="ECO:0000269" key="20">
    <source>
    </source>
</evidence>
<evidence type="ECO:0000269" key="21">
    <source>
    </source>
</evidence>
<evidence type="ECO:0000269" key="22">
    <source>
    </source>
</evidence>
<evidence type="ECO:0000269" key="23">
    <source>
    </source>
</evidence>
<evidence type="ECO:0000269" key="24">
    <source>
    </source>
</evidence>
<evidence type="ECO:0000269" key="25">
    <source>
    </source>
</evidence>
<evidence type="ECO:0000269" key="26">
    <source>
    </source>
</evidence>
<evidence type="ECO:0000269" key="27">
    <source>
    </source>
</evidence>
<evidence type="ECO:0000269" key="28">
    <source>
    </source>
</evidence>
<evidence type="ECO:0000269" key="29">
    <source>
    </source>
</evidence>
<evidence type="ECO:0000269" key="30">
    <source>
    </source>
</evidence>
<evidence type="ECO:0000269" key="31">
    <source>
    </source>
</evidence>
<evidence type="ECO:0000269" key="32">
    <source>
    </source>
</evidence>
<evidence type="ECO:0000269" key="33">
    <source>
    </source>
</evidence>
<evidence type="ECO:0000269" key="34">
    <source>
    </source>
</evidence>
<evidence type="ECO:0000269" key="35">
    <source>
    </source>
</evidence>
<evidence type="ECO:0000269" key="36">
    <source>
    </source>
</evidence>
<evidence type="ECO:0000269" key="37">
    <source>
    </source>
</evidence>
<evidence type="ECO:0000269" key="38">
    <source>
    </source>
</evidence>
<evidence type="ECO:0000269" key="39">
    <source>
    </source>
</evidence>
<evidence type="ECO:0000269" key="40">
    <source>
    </source>
</evidence>
<evidence type="ECO:0000269" key="41">
    <source>
    </source>
</evidence>
<evidence type="ECO:0000269" key="42">
    <source>
    </source>
</evidence>
<evidence type="ECO:0000269" key="43">
    <source>
    </source>
</evidence>
<evidence type="ECO:0000269" key="44">
    <source>
    </source>
</evidence>
<evidence type="ECO:0000269" key="45">
    <source>
    </source>
</evidence>
<evidence type="ECO:0000269" key="46">
    <source>
    </source>
</evidence>
<evidence type="ECO:0000269" key="47">
    <source>
    </source>
</evidence>
<evidence type="ECO:0000269" key="48">
    <source>
    </source>
</evidence>
<evidence type="ECO:0000269" key="49">
    <source>
    </source>
</evidence>
<evidence type="ECO:0000269" key="50">
    <source>
    </source>
</evidence>
<evidence type="ECO:0000269" key="51">
    <source>
    </source>
</evidence>
<evidence type="ECO:0000269" key="52">
    <source ref="10"/>
</evidence>
<evidence type="ECO:0000303" key="53">
    <source>
    </source>
</evidence>
<evidence type="ECO:0000303" key="54">
    <source>
    </source>
</evidence>
<evidence type="ECO:0000303" key="55">
    <source>
    </source>
</evidence>
<evidence type="ECO:0000303" key="56">
    <source>
    </source>
</evidence>
<evidence type="ECO:0000303" key="57">
    <source>
    </source>
</evidence>
<evidence type="ECO:0000303" key="58">
    <source>
    </source>
</evidence>
<evidence type="ECO:0000303" key="59">
    <source ref="11"/>
</evidence>
<evidence type="ECO:0000305" key="60"/>
<evidence type="ECO:0000305" key="61">
    <source>
    </source>
</evidence>
<evidence type="ECO:0000305" key="62">
    <source>
    </source>
</evidence>
<evidence type="ECO:0000312" key="63">
    <source>
        <dbReference type="HGNC" id="HGNC:11026"/>
    </source>
</evidence>
<evidence type="ECO:0007744" key="64">
    <source>
        <dbReference type="PDB" id="6IRS"/>
    </source>
</evidence>
<evidence type="ECO:0007744" key="65">
    <source>
        <dbReference type="PDB" id="6IRT"/>
    </source>
</evidence>
<evidence type="ECO:0007744" key="66">
    <source>
        <dbReference type="PDB" id="7CMH"/>
    </source>
</evidence>
<evidence type="ECO:0007744" key="67">
    <source>
        <dbReference type="PDB" id="7CMI"/>
    </source>
</evidence>
<evidence type="ECO:0007744" key="68">
    <source>
        <dbReference type="PDB" id="7DSK"/>
    </source>
</evidence>
<evidence type="ECO:0007744" key="69">
    <source>
        <dbReference type="PDB" id="7DSL"/>
    </source>
</evidence>
<evidence type="ECO:0007744" key="70">
    <source>
        <dbReference type="PDB" id="7DSN"/>
    </source>
</evidence>
<evidence type="ECO:0007744" key="71">
    <source>
        <dbReference type="PDB" id="7DSQ"/>
    </source>
</evidence>
<evidence type="ECO:0007744" key="72">
    <source>
        <dbReference type="PDB" id="7EPZ"/>
    </source>
</evidence>
<evidence type="ECO:0007744" key="73">
    <source>
        <dbReference type="PDB" id="7P9U"/>
    </source>
</evidence>
<evidence type="ECO:0007744" key="74">
    <source>
        <dbReference type="PDB" id="7P9V"/>
    </source>
</evidence>
<evidence type="ECO:0007744" key="75">
    <source>
    </source>
</evidence>
<evidence type="ECO:0007744" key="76">
    <source>
    </source>
</evidence>
<evidence type="ECO:0007744" key="77">
    <source>
    </source>
</evidence>
<evidence type="ECO:0007744" key="78">
    <source>
    </source>
</evidence>
<evidence type="ECO:0007744" key="79">
    <source>
    </source>
</evidence>
<evidence type="ECO:0007744" key="80">
    <source>
    </source>
</evidence>
<evidence type="ECO:0007744" key="81">
    <source>
    </source>
</evidence>
<evidence type="ECO:0007829" key="82">
    <source>
        <dbReference type="PDB" id="2DH2"/>
    </source>
</evidence>
<evidence type="ECO:0007829" key="83">
    <source>
        <dbReference type="PDB" id="2DH3"/>
    </source>
</evidence>
<evidence type="ECO:0007829" key="84">
    <source>
        <dbReference type="PDB" id="6S8V"/>
    </source>
</evidence>
<evidence type="ECO:0007829" key="85">
    <source>
        <dbReference type="PDB" id="7CMI"/>
    </source>
</evidence>
<evidence type="ECO:0007829" key="86">
    <source>
        <dbReference type="PDB" id="7DF1"/>
    </source>
</evidence>
<evidence type="ECO:0007829" key="87">
    <source>
        <dbReference type="PDB" id="7DSK"/>
    </source>
</evidence>
<evidence type="ECO:0007829" key="88">
    <source>
        <dbReference type="PDB" id="7DSQ"/>
    </source>
</evidence>
<evidence type="ECO:0007829" key="89">
    <source>
        <dbReference type="PDB" id="8A6L"/>
    </source>
</evidence>
<evidence type="ECO:0007829" key="90">
    <source>
        <dbReference type="PDB" id="8G0M"/>
    </source>
</evidence>
<evidence type="ECO:0007829" key="91">
    <source>
        <dbReference type="PDB" id="8WNS"/>
    </source>
</evidence>
<evidence type="ECO:0007829" key="92">
    <source>
        <dbReference type="PDB" id="8X0W"/>
    </source>
</evidence>
<evidence type="ECO:0007829" key="93">
    <source>
        <dbReference type="PDB" id="8XPU"/>
    </source>
</evidence>
<accession>P08195</accession>
<accession>J3KPF3</accession>
<accession>Q13543</accession>